<dbReference type="EC" id="1.6.3.-" evidence="13"/>
<dbReference type="EMBL" id="AF469769">
    <property type="protein sequence ID" value="AAL76082.1"/>
    <property type="molecule type" value="Genomic_DNA"/>
</dbReference>
<dbReference type="EMBL" id="AF469757">
    <property type="protein sequence ID" value="AAL76082.1"/>
    <property type="status" value="JOINED"/>
    <property type="molecule type" value="Genomic_DNA"/>
</dbReference>
<dbReference type="EMBL" id="AF469758">
    <property type="protein sequence ID" value="AAL76082.1"/>
    <property type="status" value="JOINED"/>
    <property type="molecule type" value="Genomic_DNA"/>
</dbReference>
<dbReference type="EMBL" id="AF469759">
    <property type="protein sequence ID" value="AAL76082.1"/>
    <property type="status" value="JOINED"/>
    <property type="molecule type" value="Genomic_DNA"/>
</dbReference>
<dbReference type="EMBL" id="AF469760">
    <property type="protein sequence ID" value="AAL76082.1"/>
    <property type="status" value="JOINED"/>
    <property type="molecule type" value="Genomic_DNA"/>
</dbReference>
<dbReference type="EMBL" id="AF469761">
    <property type="protein sequence ID" value="AAL76082.1"/>
    <property type="status" value="JOINED"/>
    <property type="molecule type" value="Genomic_DNA"/>
</dbReference>
<dbReference type="EMBL" id="AF469762">
    <property type="protein sequence ID" value="AAL76082.1"/>
    <property type="status" value="JOINED"/>
    <property type="molecule type" value="Genomic_DNA"/>
</dbReference>
<dbReference type="EMBL" id="AF469763">
    <property type="protein sequence ID" value="AAL76082.1"/>
    <property type="status" value="JOINED"/>
    <property type="molecule type" value="Genomic_DNA"/>
</dbReference>
<dbReference type="EMBL" id="AF469764">
    <property type="protein sequence ID" value="AAL76082.1"/>
    <property type="status" value="JOINED"/>
    <property type="molecule type" value="Genomic_DNA"/>
</dbReference>
<dbReference type="EMBL" id="AF469765">
    <property type="protein sequence ID" value="AAL76082.1"/>
    <property type="status" value="JOINED"/>
    <property type="molecule type" value="Genomic_DNA"/>
</dbReference>
<dbReference type="EMBL" id="AF469766">
    <property type="protein sequence ID" value="AAL76082.1"/>
    <property type="status" value="JOINED"/>
    <property type="molecule type" value="Genomic_DNA"/>
</dbReference>
<dbReference type="EMBL" id="AF469767">
    <property type="protein sequence ID" value="AAL76082.1"/>
    <property type="status" value="JOINED"/>
    <property type="molecule type" value="Genomic_DNA"/>
</dbReference>
<dbReference type="EMBL" id="AF469768">
    <property type="protein sequence ID" value="AAL76082.1"/>
    <property type="status" value="JOINED"/>
    <property type="molecule type" value="Genomic_DNA"/>
</dbReference>
<dbReference type="EMBL" id="AK289753">
    <property type="protein sequence ID" value="BAF82442.1"/>
    <property type="molecule type" value="mRNA"/>
</dbReference>
<dbReference type="EMBL" id="DQ314869">
    <property type="protein sequence ID" value="ABC40728.1"/>
    <property type="molecule type" value="Genomic_DNA"/>
</dbReference>
<dbReference type="EMBL" id="AC233292">
    <property type="status" value="NOT_ANNOTATED_CDS"/>
    <property type="molecule type" value="Genomic_DNA"/>
</dbReference>
<dbReference type="EMBL" id="AL627245">
    <property type="status" value="NOT_ANNOTATED_CDS"/>
    <property type="molecule type" value="Genomic_DNA"/>
</dbReference>
<dbReference type="EMBL" id="CH471141">
    <property type="protein sequence ID" value="EAW59453.1"/>
    <property type="molecule type" value="Genomic_DNA"/>
</dbReference>
<dbReference type="EMBL" id="BC032720">
    <property type="protein sequence ID" value="AAH32720.1"/>
    <property type="molecule type" value="mRNA"/>
</dbReference>
<dbReference type="EMBL" id="X04011">
    <property type="protein sequence ID" value="CAA27635.1"/>
    <property type="status" value="ALT_INIT"/>
    <property type="molecule type" value="mRNA"/>
</dbReference>
<dbReference type="EMBL" id="AB013904">
    <property type="protein sequence ID" value="BAA34183.1"/>
    <property type="molecule type" value="Genomic_DNA"/>
</dbReference>
<dbReference type="EMBL" id="X05895">
    <property type="protein sequence ID" value="CAA29327.1"/>
    <property type="status" value="ALT_SEQ"/>
    <property type="molecule type" value="Genomic_DNA"/>
</dbReference>
<dbReference type="CCDS" id="CCDS14242.1"/>
<dbReference type="PIR" id="S70773">
    <property type="entry name" value="S70773"/>
</dbReference>
<dbReference type="RefSeq" id="NP_000388.2">
    <property type="nucleotide sequence ID" value="NM_000397.3"/>
</dbReference>
<dbReference type="PDB" id="3A1F">
    <property type="method" value="X-ray"/>
    <property type="resolution" value="2.00 A"/>
    <property type="chains" value="A=385-570"/>
</dbReference>
<dbReference type="PDB" id="7U8G">
    <property type="method" value="EM"/>
    <property type="resolution" value="3.20 A"/>
    <property type="chains" value="A=2-570"/>
</dbReference>
<dbReference type="PDB" id="8GZ3">
    <property type="method" value="EM"/>
    <property type="resolution" value="3.30 A"/>
    <property type="chains" value="B=1-570"/>
</dbReference>
<dbReference type="PDB" id="8KEI">
    <property type="method" value="EM"/>
    <property type="resolution" value="3.56 A"/>
    <property type="chains" value="B=6-570"/>
</dbReference>
<dbReference type="PDB" id="8WEJ">
    <property type="method" value="EM"/>
    <property type="resolution" value="2.79 A"/>
    <property type="chains" value="B=1-570"/>
</dbReference>
<dbReference type="PDB" id="8X2L">
    <property type="method" value="EM"/>
    <property type="resolution" value="2.99 A"/>
    <property type="chains" value="B=1-570"/>
</dbReference>
<dbReference type="PDBsum" id="3A1F"/>
<dbReference type="PDBsum" id="7U8G"/>
<dbReference type="PDBsum" id="8GZ3"/>
<dbReference type="PDBsum" id="8KEI"/>
<dbReference type="PDBsum" id="8WEJ"/>
<dbReference type="PDBsum" id="8X2L"/>
<dbReference type="EMDB" id="EMD-26383"/>
<dbReference type="EMDB" id="EMD-34389"/>
<dbReference type="EMDB" id="EMD-37159"/>
<dbReference type="EMDB" id="EMD-37477"/>
<dbReference type="EMDB" id="EMD-38016"/>
<dbReference type="SMR" id="P04839"/>
<dbReference type="BioGRID" id="107916">
    <property type="interactions" value="21"/>
</dbReference>
<dbReference type="ComplexPortal" id="CPX-1017">
    <property type="entry name" value="Phagocyte NADPH oxidase complex, RAC1 variant"/>
</dbReference>
<dbReference type="ComplexPortal" id="CPX-6134">
    <property type="entry name" value="Phagocyte NADPH oxidase complex, RAC2 variant"/>
</dbReference>
<dbReference type="ComplexPortal" id="CPX-6135">
    <property type="entry name" value="Phagocyte NADPH oxidase complex, RAC3 variant"/>
</dbReference>
<dbReference type="CORUM" id="P04839"/>
<dbReference type="DIP" id="DIP-42005N"/>
<dbReference type="FunCoup" id="P04839">
    <property type="interactions" value="607"/>
</dbReference>
<dbReference type="IntAct" id="P04839">
    <property type="interactions" value="11"/>
</dbReference>
<dbReference type="STRING" id="9606.ENSP00000367851"/>
<dbReference type="BindingDB" id="P04839"/>
<dbReference type="ChEMBL" id="CHEMBL1287627"/>
<dbReference type="DrugBank" id="DB00514">
    <property type="generic name" value="Dextromethorphan"/>
</dbReference>
<dbReference type="GuidetoPHARMACOLOGY" id="3002"/>
<dbReference type="PeroxiBase" id="5962">
    <property type="entry name" value="HsNOx02"/>
</dbReference>
<dbReference type="TCDB" id="5.B.1.1.1">
    <property type="family name" value="the phagocyte (gp91(phox)) nadph oxidase family"/>
</dbReference>
<dbReference type="GlyConnect" id="1165">
    <property type="glycosylation" value="2 N-Linked glycans (1 site)"/>
</dbReference>
<dbReference type="GlyCosmos" id="P04839">
    <property type="glycosylation" value="3 sites, 2 glycans"/>
</dbReference>
<dbReference type="GlyGen" id="P04839">
    <property type="glycosylation" value="8 sites, 10 N-linked glycans (3 sites)"/>
</dbReference>
<dbReference type="iPTMnet" id="P04839"/>
<dbReference type="PhosphoSitePlus" id="P04839"/>
<dbReference type="SwissPalm" id="P04839"/>
<dbReference type="BioMuta" id="CYBB"/>
<dbReference type="DMDM" id="115211"/>
<dbReference type="CPTAC" id="CPTAC-1181"/>
<dbReference type="CPTAC" id="CPTAC-1203"/>
<dbReference type="MassIVE" id="P04839"/>
<dbReference type="PaxDb" id="9606-ENSP00000367851"/>
<dbReference type="PeptideAtlas" id="P04839"/>
<dbReference type="PRIDE" id="P04839"/>
<dbReference type="ProteomicsDB" id="51748"/>
<dbReference type="Pumba" id="P04839"/>
<dbReference type="ABCD" id="P04839">
    <property type="antibodies" value="1 sequenced antibody"/>
</dbReference>
<dbReference type="Antibodypedia" id="24864">
    <property type="antibodies" value="525 antibodies from 41 providers"/>
</dbReference>
<dbReference type="DNASU" id="1536"/>
<dbReference type="Ensembl" id="ENST00000378588.5">
    <property type="protein sequence ID" value="ENSP00000367851.4"/>
    <property type="gene ID" value="ENSG00000165168.9"/>
</dbReference>
<dbReference type="GeneID" id="1536"/>
<dbReference type="KEGG" id="hsa:1536"/>
<dbReference type="MANE-Select" id="ENST00000378588.5">
    <property type="protein sequence ID" value="ENSP00000367851.4"/>
    <property type="RefSeq nucleotide sequence ID" value="NM_000397.4"/>
    <property type="RefSeq protein sequence ID" value="NP_000388.2"/>
</dbReference>
<dbReference type="UCSC" id="uc004ddr.3">
    <property type="organism name" value="human"/>
</dbReference>
<dbReference type="AGR" id="HGNC:2578"/>
<dbReference type="CTD" id="1536"/>
<dbReference type="DisGeNET" id="1536"/>
<dbReference type="GeneCards" id="CYBB"/>
<dbReference type="GeneReviews" id="CYBB"/>
<dbReference type="HGNC" id="HGNC:2578">
    <property type="gene designation" value="CYBB"/>
</dbReference>
<dbReference type="HPA" id="ENSG00000165168">
    <property type="expression patterns" value="Tissue enhanced (bone marrow, lymphoid tissue)"/>
</dbReference>
<dbReference type="MalaCards" id="CYBB"/>
<dbReference type="MIM" id="300481">
    <property type="type" value="gene"/>
</dbReference>
<dbReference type="MIM" id="300645">
    <property type="type" value="phenotype"/>
</dbReference>
<dbReference type="MIM" id="306400">
    <property type="type" value="phenotype"/>
</dbReference>
<dbReference type="neXtProt" id="NX_P04839"/>
<dbReference type="OpenTargets" id="ENSG00000165168"/>
<dbReference type="Orphanet" id="379">
    <property type="disease" value="Chronic granulomatous disease"/>
</dbReference>
<dbReference type="Orphanet" id="319623">
    <property type="disease" value="X-linked mendelian susceptibility to mycobacterial diseases due to CYBB deficiency"/>
</dbReference>
<dbReference type="PharmGKB" id="PA27076"/>
<dbReference type="VEuPathDB" id="HostDB:ENSG00000165168"/>
<dbReference type="eggNOG" id="KOG0039">
    <property type="taxonomic scope" value="Eukaryota"/>
</dbReference>
<dbReference type="GeneTree" id="ENSGT00940000160244"/>
<dbReference type="HOGENOM" id="CLU_005646_3_1_1"/>
<dbReference type="InParanoid" id="P04839"/>
<dbReference type="OMA" id="FTFAKEH"/>
<dbReference type="OrthoDB" id="167398at2759"/>
<dbReference type="PAN-GO" id="P04839">
    <property type="GO annotations" value="4 GO annotations based on evolutionary models"/>
</dbReference>
<dbReference type="PhylomeDB" id="P04839"/>
<dbReference type="TreeFam" id="TF105354"/>
<dbReference type="PathwayCommons" id="P04839"/>
<dbReference type="Reactome" id="R-HSA-1222556">
    <property type="pathway name" value="ROS and RNS production in phagocytes"/>
</dbReference>
<dbReference type="Reactome" id="R-HSA-1236973">
    <property type="pathway name" value="Cross-presentation of particulate exogenous antigens (phagosomes)"/>
</dbReference>
<dbReference type="Reactome" id="R-HSA-3299685">
    <property type="pathway name" value="Detoxification of Reactive Oxygen Species"/>
</dbReference>
<dbReference type="Reactome" id="R-HSA-4420097">
    <property type="pathway name" value="VEGFA-VEGFR2 Pathway"/>
</dbReference>
<dbReference type="Reactome" id="R-HSA-5668599">
    <property type="pathway name" value="RHO GTPases Activate NADPH Oxidases"/>
</dbReference>
<dbReference type="Reactome" id="R-HSA-6798695">
    <property type="pathway name" value="Neutrophil degranulation"/>
</dbReference>
<dbReference type="Reactome" id="R-HSA-9013149">
    <property type="pathway name" value="RAC1 GTPase cycle"/>
</dbReference>
<dbReference type="Reactome" id="R-HSA-9013404">
    <property type="pathway name" value="RAC2 GTPase cycle"/>
</dbReference>
<dbReference type="Reactome" id="R-HSA-9013423">
    <property type="pathway name" value="RAC3 GTPase cycle"/>
</dbReference>
<dbReference type="SignaLink" id="P04839"/>
<dbReference type="SIGNOR" id="P04839"/>
<dbReference type="BioGRID-ORCS" id="1536">
    <property type="hits" value="9 hits in 778 CRISPR screens"/>
</dbReference>
<dbReference type="ChiTaRS" id="CYBB">
    <property type="organism name" value="human"/>
</dbReference>
<dbReference type="EvolutionaryTrace" id="P04839"/>
<dbReference type="GeneWiki" id="CYBB"/>
<dbReference type="GenomeRNAi" id="1536"/>
<dbReference type="Pharos" id="P04839">
    <property type="development level" value="Tchem"/>
</dbReference>
<dbReference type="PRO" id="PR:P04839"/>
<dbReference type="Proteomes" id="UP000005640">
    <property type="component" value="Chromosome X"/>
</dbReference>
<dbReference type="RNAct" id="P04839">
    <property type="molecule type" value="protein"/>
</dbReference>
<dbReference type="Bgee" id="ENSG00000165168">
    <property type="expression patterns" value="Expressed in monocyte and 172 other cell types or tissues"/>
</dbReference>
<dbReference type="ExpressionAtlas" id="P04839">
    <property type="expression patterns" value="baseline and differential"/>
</dbReference>
<dbReference type="GO" id="GO:0030425">
    <property type="term" value="C:dendrite"/>
    <property type="evidence" value="ECO:0007669"/>
    <property type="project" value="Ensembl"/>
</dbReference>
<dbReference type="GO" id="GO:0005789">
    <property type="term" value="C:endoplasmic reticulum membrane"/>
    <property type="evidence" value="ECO:0000304"/>
    <property type="project" value="Reactome"/>
</dbReference>
<dbReference type="GO" id="GO:0034702">
    <property type="term" value="C:monoatomic ion channel complex"/>
    <property type="evidence" value="ECO:0007669"/>
    <property type="project" value="UniProtKB-KW"/>
</dbReference>
<dbReference type="GO" id="GO:0043020">
    <property type="term" value="C:NADPH oxidase complex"/>
    <property type="evidence" value="ECO:0000314"/>
    <property type="project" value="UniProtKB"/>
</dbReference>
<dbReference type="GO" id="GO:0043025">
    <property type="term" value="C:neuronal cell body"/>
    <property type="evidence" value="ECO:0007669"/>
    <property type="project" value="Ensembl"/>
</dbReference>
<dbReference type="GO" id="GO:0005635">
    <property type="term" value="C:nuclear envelope"/>
    <property type="evidence" value="ECO:0007669"/>
    <property type="project" value="Ensembl"/>
</dbReference>
<dbReference type="GO" id="GO:0097038">
    <property type="term" value="C:perinuclear endoplasmic reticulum"/>
    <property type="evidence" value="ECO:0007669"/>
    <property type="project" value="Ensembl"/>
</dbReference>
<dbReference type="GO" id="GO:0030670">
    <property type="term" value="C:phagocytic vesicle membrane"/>
    <property type="evidence" value="ECO:0000304"/>
    <property type="project" value="Reactome"/>
</dbReference>
<dbReference type="GO" id="GO:0005886">
    <property type="term" value="C:plasma membrane"/>
    <property type="evidence" value="ECO:0000314"/>
    <property type="project" value="UniProtKB"/>
</dbReference>
<dbReference type="GO" id="GO:0035579">
    <property type="term" value="C:specific granule membrane"/>
    <property type="evidence" value="ECO:0000304"/>
    <property type="project" value="Reactome"/>
</dbReference>
<dbReference type="GO" id="GO:0070821">
    <property type="term" value="C:tertiary granule membrane"/>
    <property type="evidence" value="ECO:0000304"/>
    <property type="project" value="Reactome"/>
</dbReference>
<dbReference type="GO" id="GO:0071949">
    <property type="term" value="F:FAD binding"/>
    <property type="evidence" value="ECO:0000314"/>
    <property type="project" value="UniProtKB"/>
</dbReference>
<dbReference type="GO" id="GO:0050660">
    <property type="term" value="F:flavin adenine dinucleotide binding"/>
    <property type="evidence" value="ECO:0000315"/>
    <property type="project" value="BHF-UCL"/>
</dbReference>
<dbReference type="GO" id="GO:0020037">
    <property type="term" value="F:heme binding"/>
    <property type="evidence" value="ECO:0000315"/>
    <property type="project" value="BHF-UCL"/>
</dbReference>
<dbReference type="GO" id="GO:0046872">
    <property type="term" value="F:metal ion binding"/>
    <property type="evidence" value="ECO:0007669"/>
    <property type="project" value="UniProtKB-KW"/>
</dbReference>
<dbReference type="GO" id="GO:0070402">
    <property type="term" value="F:NADPH binding"/>
    <property type="evidence" value="ECO:0000314"/>
    <property type="project" value="UniProtKB"/>
</dbReference>
<dbReference type="GO" id="GO:0046982">
    <property type="term" value="F:protein heterodimerization activity"/>
    <property type="evidence" value="ECO:0000353"/>
    <property type="project" value="BHF-UCL"/>
</dbReference>
<dbReference type="GO" id="GO:0016175">
    <property type="term" value="F:superoxide-generating NAD(P)H oxidase activity"/>
    <property type="evidence" value="ECO:0000304"/>
    <property type="project" value="BHF-UCL"/>
</dbReference>
<dbReference type="GO" id="GO:0106292">
    <property type="term" value="F:superoxide-generating NADPH oxidase activity"/>
    <property type="evidence" value="ECO:0000314"/>
    <property type="project" value="UniProtKB"/>
</dbReference>
<dbReference type="GO" id="GO:0071276">
    <property type="term" value="P:cellular response to cadmium ion"/>
    <property type="evidence" value="ECO:0007669"/>
    <property type="project" value="Ensembl"/>
</dbReference>
<dbReference type="GO" id="GO:0071361">
    <property type="term" value="P:cellular response to ethanol"/>
    <property type="evidence" value="ECO:0007669"/>
    <property type="project" value="Ensembl"/>
</dbReference>
<dbReference type="GO" id="GO:1904845">
    <property type="term" value="P:cellular response to L-glutamine"/>
    <property type="evidence" value="ECO:0007669"/>
    <property type="project" value="Ensembl"/>
</dbReference>
<dbReference type="GO" id="GO:0006952">
    <property type="term" value="P:defense response"/>
    <property type="evidence" value="ECO:0000318"/>
    <property type="project" value="GO_Central"/>
</dbReference>
<dbReference type="GO" id="GO:0050665">
    <property type="term" value="P:hydrogen peroxide biosynthetic process"/>
    <property type="evidence" value="ECO:0007669"/>
    <property type="project" value="Ensembl"/>
</dbReference>
<dbReference type="GO" id="GO:0097411">
    <property type="term" value="P:hypoxia-inducible factor-1alpha signaling pathway"/>
    <property type="evidence" value="ECO:0007669"/>
    <property type="project" value="Ensembl"/>
</dbReference>
<dbReference type="GO" id="GO:0006954">
    <property type="term" value="P:inflammatory response"/>
    <property type="evidence" value="ECO:0000250"/>
    <property type="project" value="UniProtKB"/>
</dbReference>
<dbReference type="GO" id="GO:0045087">
    <property type="term" value="P:innate immune response"/>
    <property type="evidence" value="ECO:0000315"/>
    <property type="project" value="BHF-UCL"/>
</dbReference>
<dbReference type="GO" id="GO:0034220">
    <property type="term" value="P:monoatomic ion transmembrane transport"/>
    <property type="evidence" value="ECO:0007669"/>
    <property type="project" value="UniProtKB-KW"/>
</dbReference>
<dbReference type="GO" id="GO:0045766">
    <property type="term" value="P:positive regulation of angiogenesis"/>
    <property type="evidence" value="ECO:0007669"/>
    <property type="project" value="Ensembl"/>
</dbReference>
<dbReference type="GO" id="GO:0032760">
    <property type="term" value="P:positive regulation of tumor necrosis factor production"/>
    <property type="evidence" value="ECO:0007669"/>
    <property type="project" value="Ensembl"/>
</dbReference>
<dbReference type="GO" id="GO:0045730">
    <property type="term" value="P:respiratory burst"/>
    <property type="evidence" value="ECO:0000315"/>
    <property type="project" value="BHF-UCL"/>
</dbReference>
<dbReference type="GO" id="GO:1904044">
    <property type="term" value="P:response to aldosterone"/>
    <property type="evidence" value="ECO:0007669"/>
    <property type="project" value="Ensembl"/>
</dbReference>
<dbReference type="GO" id="GO:1990776">
    <property type="term" value="P:response to angiotensin"/>
    <property type="evidence" value="ECO:0007669"/>
    <property type="project" value="Ensembl"/>
</dbReference>
<dbReference type="GO" id="GO:0007584">
    <property type="term" value="P:response to nutrient"/>
    <property type="evidence" value="ECO:0007669"/>
    <property type="project" value="Ensembl"/>
</dbReference>
<dbReference type="GO" id="GO:0009410">
    <property type="term" value="P:response to xenobiotic stimulus"/>
    <property type="evidence" value="ECO:0007669"/>
    <property type="project" value="Ensembl"/>
</dbReference>
<dbReference type="GO" id="GO:0042554">
    <property type="term" value="P:superoxide anion generation"/>
    <property type="evidence" value="ECO:0000314"/>
    <property type="project" value="UniProtKB"/>
</dbReference>
<dbReference type="GO" id="GO:0006801">
    <property type="term" value="P:superoxide metabolic process"/>
    <property type="evidence" value="ECO:0000314"/>
    <property type="project" value="BHF-UCL"/>
</dbReference>
<dbReference type="CDD" id="cd06186">
    <property type="entry name" value="NOX_Duox_like_FAD_NADP"/>
    <property type="match status" value="1"/>
</dbReference>
<dbReference type="FunFam" id="2.40.30.10:FF:000030">
    <property type="entry name" value="cytochrome b-245 heavy chain"/>
    <property type="match status" value="1"/>
</dbReference>
<dbReference type="FunFam" id="3.40.50.80:FF:000004">
    <property type="entry name" value="NADPH oxidase isoform 2"/>
    <property type="match status" value="1"/>
</dbReference>
<dbReference type="Gene3D" id="3.40.50.80">
    <property type="entry name" value="Nucleotide-binding domain of ferredoxin-NADP reductase (FNR) module"/>
    <property type="match status" value="1"/>
</dbReference>
<dbReference type="Gene3D" id="2.40.30.10">
    <property type="entry name" value="Translation factors"/>
    <property type="match status" value="1"/>
</dbReference>
<dbReference type="InterPro" id="IPR000778">
    <property type="entry name" value="Cyt_b245_heavy_chain"/>
</dbReference>
<dbReference type="InterPro" id="IPR013112">
    <property type="entry name" value="FAD-bd_8"/>
</dbReference>
<dbReference type="InterPro" id="IPR017927">
    <property type="entry name" value="FAD-bd_FR_type"/>
</dbReference>
<dbReference type="InterPro" id="IPR013130">
    <property type="entry name" value="Fe3_Rdtase_TM_dom"/>
</dbReference>
<dbReference type="InterPro" id="IPR013121">
    <property type="entry name" value="Fe_red_NAD-bd_6"/>
</dbReference>
<dbReference type="InterPro" id="IPR039261">
    <property type="entry name" value="FNR_nucleotide-bd"/>
</dbReference>
<dbReference type="InterPro" id="IPR050369">
    <property type="entry name" value="RBOH/FRE"/>
</dbReference>
<dbReference type="InterPro" id="IPR017938">
    <property type="entry name" value="Riboflavin_synthase-like_b-brl"/>
</dbReference>
<dbReference type="PANTHER" id="PTHR11972:SF60">
    <property type="entry name" value="CYTOCHROME B-245 HEAVY CHAIN"/>
    <property type="match status" value="1"/>
</dbReference>
<dbReference type="PANTHER" id="PTHR11972">
    <property type="entry name" value="NADPH OXIDASE"/>
    <property type="match status" value="1"/>
</dbReference>
<dbReference type="Pfam" id="PF08022">
    <property type="entry name" value="FAD_binding_8"/>
    <property type="match status" value="1"/>
</dbReference>
<dbReference type="Pfam" id="PF01794">
    <property type="entry name" value="Ferric_reduct"/>
    <property type="match status" value="1"/>
</dbReference>
<dbReference type="Pfam" id="PF08030">
    <property type="entry name" value="NAD_binding_6"/>
    <property type="match status" value="1"/>
</dbReference>
<dbReference type="PRINTS" id="PR00466">
    <property type="entry name" value="GP91PHOX"/>
</dbReference>
<dbReference type="SFLD" id="SFLDS00052">
    <property type="entry name" value="Ferric_Reductase_Domain"/>
    <property type="match status" value="1"/>
</dbReference>
<dbReference type="SFLD" id="SFLDG01168">
    <property type="entry name" value="Ferric_reductase_subgroup_(FRE"/>
    <property type="match status" value="1"/>
</dbReference>
<dbReference type="SUPFAM" id="SSF52343">
    <property type="entry name" value="Ferredoxin reductase-like, C-terminal NADP-linked domain"/>
    <property type="match status" value="1"/>
</dbReference>
<dbReference type="SUPFAM" id="SSF63380">
    <property type="entry name" value="Riboflavin synthase domain-like"/>
    <property type="match status" value="1"/>
</dbReference>
<dbReference type="PROSITE" id="PS51384">
    <property type="entry name" value="FAD_FR"/>
    <property type="match status" value="1"/>
</dbReference>
<proteinExistence type="evidence at protein level"/>
<accession>P04839</accession>
<accession>A8K138</accession>
<accession>Q2PP16</accession>
<protein>
    <recommendedName>
        <fullName evidence="40">NADPH oxidase 2</fullName>
        <ecNumber evidence="13">1.6.3.-</ecNumber>
    </recommendedName>
    <alternativeName>
        <fullName>CGD91-phox</fullName>
    </alternativeName>
    <alternativeName>
        <fullName>Cytochrome b(558) subunit beta</fullName>
        <shortName>Cytochrome b558 subunit beta</shortName>
    </alternativeName>
    <alternativeName>
        <fullName>Cytochrome b-245 heavy chain</fullName>
    </alternativeName>
    <alternativeName>
        <fullName>Heme-binding membrane glycoprotein gp91phox</fullName>
    </alternativeName>
    <alternativeName>
        <fullName>Neutrophil cytochrome b 91 kDa polypeptide</fullName>
    </alternativeName>
    <alternativeName>
        <fullName>Superoxide-generating NADPH oxidase heavy chain subunit</fullName>
    </alternativeName>
    <alternativeName>
        <fullName>gp91-1</fullName>
    </alternativeName>
    <alternativeName>
        <fullName>gp91-phox</fullName>
    </alternativeName>
    <alternativeName>
        <fullName>p22 phagocyte B-cytochrome</fullName>
    </alternativeName>
</protein>
<gene>
    <name evidence="43" type="primary">CYBB</name>
    <name type="synonym">NOX2</name>
</gene>
<feature type="initiator methionine" description="Removed" evidence="25">
    <location>
        <position position="1"/>
    </location>
</feature>
<feature type="chain" id="PRO_0000210145" description="NADPH oxidase 2">
    <location>
        <begin position="2"/>
        <end position="570"/>
    </location>
</feature>
<feature type="topological domain" description="Cytoplasmic" evidence="27">
    <location>
        <begin position="2"/>
        <end position="9"/>
    </location>
</feature>
<feature type="transmembrane region" description="Helical" evidence="26 27 44 45">
    <location>
        <begin position="10"/>
        <end position="36"/>
    </location>
</feature>
<feature type="topological domain" description="Extracellular" evidence="27">
    <location>
        <begin position="37"/>
        <end position="46"/>
    </location>
</feature>
<feature type="transmembrane region" description="Helical" evidence="26 27 44 45">
    <location>
        <begin position="47"/>
        <end position="72"/>
    </location>
</feature>
<feature type="topological domain" description="Cytoplasmic" evidence="27">
    <location>
        <begin position="73"/>
        <end position="95"/>
    </location>
</feature>
<feature type="transmembrane region" description="Helical" evidence="26 27 44 45">
    <location>
        <begin position="96"/>
        <end position="130"/>
    </location>
</feature>
<feature type="topological domain" description="Extracellular" evidence="27">
    <location>
        <begin position="131"/>
        <end position="163"/>
    </location>
</feature>
<feature type="transmembrane region" description="Helical" evidence="26 27 44 45">
    <location>
        <begin position="164"/>
        <end position="194"/>
    </location>
</feature>
<feature type="topological domain" description="Cytoplasmic" evidence="27">
    <location>
        <begin position="195"/>
        <end position="203"/>
    </location>
</feature>
<feature type="transmembrane region" description="Helical" evidence="26 27 44 45">
    <location>
        <begin position="204"/>
        <end position="222"/>
    </location>
</feature>
<feature type="topological domain" description="Extracellular" evidence="27">
    <location>
        <begin position="223"/>
        <end position="267"/>
    </location>
</feature>
<feature type="transmembrane region" description="Helical" evidence="26 27 44 45">
    <location>
        <begin position="268"/>
        <end position="285"/>
    </location>
</feature>
<feature type="topological domain" description="Cytoplasmic" evidence="27">
    <location>
        <begin position="286"/>
        <end position="570"/>
    </location>
</feature>
<feature type="domain" description="Ferric oxidoreductase">
    <location>
        <begin position="54"/>
        <end position="286"/>
    </location>
</feature>
<feature type="domain" description="FAD-binding FR-type" evidence="3">
    <location>
        <begin position="287"/>
        <end position="397"/>
    </location>
</feature>
<feature type="binding site" description="axial binding residue" evidence="27 28 45">
    <location>
        <position position="101"/>
    </location>
    <ligand>
        <name>heme b</name>
        <dbReference type="ChEBI" id="CHEBI:60344"/>
        <label>1</label>
    </ligand>
    <ligandPart>
        <name>Fe</name>
        <dbReference type="ChEBI" id="CHEBI:18248"/>
    </ligandPart>
</feature>
<feature type="binding site" description="axial binding residue" evidence="27 28 45">
    <location>
        <position position="115"/>
    </location>
    <ligand>
        <name>heme b</name>
        <dbReference type="ChEBI" id="CHEBI:60344"/>
        <label>2</label>
    </ligand>
    <ligandPart>
        <name>Fe</name>
        <dbReference type="ChEBI" id="CHEBI:18248"/>
    </ligandPart>
</feature>
<feature type="binding site" evidence="27 45">
    <location>
        <position position="199"/>
    </location>
    <ligand>
        <name>FAD</name>
        <dbReference type="ChEBI" id="CHEBI:57692"/>
    </ligand>
</feature>
<feature type="binding site" evidence="27 45">
    <location>
        <position position="200"/>
    </location>
    <ligand>
        <name>FAD</name>
        <dbReference type="ChEBI" id="CHEBI:57692"/>
    </ligand>
</feature>
<feature type="binding site" evidence="27 28 45">
    <location>
        <position position="206"/>
    </location>
    <ligand>
        <name>heme b</name>
        <dbReference type="ChEBI" id="CHEBI:60344"/>
        <label>1</label>
    </ligand>
</feature>
<feature type="binding site" description="axial binding residue" evidence="27 28 45">
    <location>
        <position position="209"/>
    </location>
    <ligand>
        <name>heme b</name>
        <dbReference type="ChEBI" id="CHEBI:60344"/>
        <label>1</label>
    </ligand>
    <ligandPart>
        <name>Fe</name>
        <dbReference type="ChEBI" id="CHEBI:18248"/>
    </ligandPart>
</feature>
<feature type="binding site" description="axial binding residue" evidence="27 28 45">
    <location>
        <position position="222"/>
    </location>
    <ligand>
        <name>heme b</name>
        <dbReference type="ChEBI" id="CHEBI:60344"/>
        <label>2</label>
    </ligand>
    <ligandPart>
        <name>Fe</name>
        <dbReference type="ChEBI" id="CHEBI:18248"/>
    </ligandPart>
</feature>
<feature type="binding site" evidence="27 28 45">
    <location>
        <position position="226"/>
    </location>
    <ligand>
        <name>heme b</name>
        <dbReference type="ChEBI" id="CHEBI:60344"/>
        <label>2</label>
    </ligand>
</feature>
<feature type="binding site" evidence="27 28 45">
    <location>
        <position position="227"/>
    </location>
    <ligand>
        <name>heme b</name>
        <dbReference type="ChEBI" id="CHEBI:60344"/>
        <label>2</label>
    </ligand>
</feature>
<feature type="binding site" evidence="27 28 45">
    <location>
        <position position="268"/>
    </location>
    <ligand>
        <name>heme b</name>
        <dbReference type="ChEBI" id="CHEBI:60344"/>
        <label>2</label>
    </ligand>
</feature>
<feature type="binding site" evidence="28">
    <location>
        <position position="280"/>
    </location>
    <ligand>
        <name>heme b</name>
        <dbReference type="ChEBI" id="CHEBI:60344"/>
        <label>1</label>
    </ligand>
</feature>
<feature type="binding site" evidence="27 45">
    <location>
        <position position="287"/>
    </location>
    <ligand>
        <name>heme b</name>
        <dbReference type="ChEBI" id="CHEBI:60344"/>
        <label>1</label>
    </ligand>
</feature>
<feature type="binding site" evidence="28">
    <location>
        <position position="337"/>
    </location>
    <ligand>
        <name>FAD</name>
        <dbReference type="ChEBI" id="CHEBI:57692"/>
    </ligand>
</feature>
<feature type="binding site" evidence="27 28 45">
    <location>
        <position position="338"/>
    </location>
    <ligand>
        <name>FAD</name>
        <dbReference type="ChEBI" id="CHEBI:57692"/>
    </ligand>
</feature>
<feature type="binding site" evidence="27 45">
    <location>
        <position position="339"/>
    </location>
    <ligand>
        <name>FAD</name>
        <dbReference type="ChEBI" id="CHEBI:57692"/>
    </ligand>
</feature>
<feature type="binding site" evidence="27 28 45">
    <location>
        <position position="341"/>
    </location>
    <ligand>
        <name>FAD</name>
        <dbReference type="ChEBI" id="CHEBI:57692"/>
    </ligand>
</feature>
<feature type="binding site" evidence="27 28 45">
    <location>
        <position position="354"/>
    </location>
    <ligand>
        <name>FAD</name>
        <dbReference type="ChEBI" id="CHEBI:57692"/>
    </ligand>
</feature>
<feature type="binding site" evidence="27 28 45">
    <location>
        <position position="356"/>
    </location>
    <ligand>
        <name>FAD</name>
        <dbReference type="ChEBI" id="CHEBI:57692"/>
    </ligand>
</feature>
<feature type="binding site" evidence="27 28 45">
    <location>
        <position position="361"/>
    </location>
    <ligand>
        <name>FAD</name>
        <dbReference type="ChEBI" id="CHEBI:57692"/>
    </ligand>
</feature>
<feature type="binding site" evidence="27 28 45">
    <location>
        <position position="362"/>
    </location>
    <ligand>
        <name>FAD</name>
        <dbReference type="ChEBI" id="CHEBI:57692"/>
    </ligand>
</feature>
<feature type="binding site" evidence="28">
    <location>
        <position position="411"/>
    </location>
    <ligand>
        <name>NADPH</name>
        <dbReference type="ChEBI" id="CHEBI:57783"/>
    </ligand>
</feature>
<feature type="binding site" evidence="28">
    <location>
        <position position="446"/>
    </location>
    <ligand>
        <name>NADPH</name>
        <dbReference type="ChEBI" id="CHEBI:57783"/>
    </ligand>
</feature>
<feature type="binding site" evidence="28">
    <location>
        <position position="481"/>
    </location>
    <ligand>
        <name>NADPH</name>
        <dbReference type="ChEBI" id="CHEBI:57783"/>
    </ligand>
</feature>
<feature type="binding site" evidence="28">
    <location>
        <position position="513"/>
    </location>
    <ligand>
        <name>NADPH</name>
        <dbReference type="ChEBI" id="CHEBI:57783"/>
    </ligand>
</feature>
<feature type="glycosylation site" description="N-linked (GlcNAc...) asparagine" evidence="17 27 45">
    <location>
        <position position="132"/>
    </location>
</feature>
<feature type="glycosylation site" description="N-linked (GlcNAc...) asparagine" evidence="17">
    <location>
        <position position="149"/>
    </location>
</feature>
<feature type="glycosylation site" description="N-linked (GlcNAc...) asparagine" evidence="17 27 45">
    <location>
        <position position="240"/>
    </location>
</feature>
<feature type="cross-link" description="Glycyl lysine isopeptide (Lys-Gly) (interchain with G-Cter in ubiquitin)" evidence="2">
    <location>
        <position position="161"/>
    </location>
</feature>
<feature type="cross-link" description="Glycyl lysine isopeptide (Lys-Gly) (interchain with G-Cter in ubiquitin)" evidence="2">
    <location>
        <position position="255"/>
    </location>
</feature>
<feature type="cross-link" description="Glycyl lysine isopeptide (Lys-Gly) (interchain with G-Cter in ubiquitin)" evidence="2">
    <location>
        <position position="294"/>
    </location>
</feature>
<feature type="cross-link" description="Glycyl lysine isopeptide (Lys-Gly) (interchain with G-Cter in ubiquitin)" evidence="2">
    <location>
        <position position="299"/>
    </location>
</feature>
<feature type="cross-link" description="Glycyl lysine isopeptide (Lys-Gly) (interchain with G-Cter in ubiquitin)" evidence="2">
    <location>
        <position position="306"/>
    </location>
</feature>
<feature type="cross-link" description="Glycyl lysine isopeptide (Lys-Gly) (interchain with G-Cter in ubiquitin)" evidence="2">
    <location>
        <position position="328"/>
    </location>
</feature>
<feature type="cross-link" description="Glycyl lysine isopeptide (Lys-Gly) (interchain with G-Cter in ubiquitin)" evidence="2">
    <location>
        <position position="334"/>
    </location>
</feature>
<feature type="cross-link" description="Glycyl lysine isopeptide (Lys-Gly) (interchain with G-Cter in ubiquitin)" evidence="2">
    <location>
        <position position="381"/>
    </location>
</feature>
<feature type="cross-link" description="Glycyl lysine isopeptide (Lys-Gly) (interchain with G-Cter in ubiquitin)" evidence="2">
    <location>
        <position position="506"/>
    </location>
</feature>
<feature type="cross-link" description="Glycyl lysine isopeptide (Lys-Gly) (interchain with G-Cter in ubiquitin)" evidence="2">
    <location>
        <position position="567"/>
    </location>
</feature>
<feature type="sequence variant" id="VAR_047264" description="In CGDX." evidence="7">
    <original>W</original>
    <variation>C</variation>
    <location>
        <position position="18"/>
    </location>
</feature>
<feature type="sequence variant" id="VAR_007873" description="In CGDX; dbSNP:rs151344455." evidence="35">
    <original>G</original>
    <variation>R</variation>
    <location>
        <position position="20"/>
    </location>
</feature>
<feature type="sequence variant" id="VAR_025613" description="In CGDX; dbSNP:rs151344453." evidence="12">
    <original>Y</original>
    <variation>D</variation>
    <location>
        <position position="41"/>
    </location>
</feature>
<feature type="sequence variant" id="VAR_047265" description="In CGDX." evidence="8">
    <location>
        <begin position="54"/>
        <end position="55"/>
    </location>
</feature>
<feature type="sequence variant" id="VAR_025614" description="In CGDX; dbSNP:rs151344479." evidence="6 21 36">
    <original>R</original>
    <variation>M</variation>
    <location>
        <position position="54"/>
    </location>
</feature>
<feature type="sequence variant" id="VAR_007874" description="In CGDX; dbSNP:rs151344456." evidence="35">
    <original>R</original>
    <variation>S</variation>
    <location>
        <position position="54"/>
    </location>
</feature>
<feature type="sequence variant" id="VAR_025615" description="In CGDX; dbSNP:rs151344480." evidence="6 36">
    <original>A</original>
    <variation>D</variation>
    <location>
        <position position="55"/>
    </location>
</feature>
<feature type="sequence variant" id="VAR_008845" description="In CGDX; dbSNP:rs151344481." evidence="6 30 36">
    <original>A</original>
    <variation>E</variation>
    <location>
        <position position="57"/>
    </location>
</feature>
<feature type="sequence variant" id="VAR_007875" description="In CGDX; dbSNP:rs151344457." evidence="35">
    <original>C</original>
    <variation>R</variation>
    <location>
        <position position="59"/>
    </location>
</feature>
<feature type="sequence variant" id="VAR_047266" description="In CGDX; dbSNP:rs151344488." evidence="8">
    <original>C</original>
    <variation>W</variation>
    <location>
        <position position="59"/>
    </location>
</feature>
<feature type="sequence variant" id="VAR_002432" description="In CGDX; dbSNP:rs137854591." evidence="14">
    <original>H</original>
    <variation>R</variation>
    <location>
        <position position="101"/>
    </location>
</feature>
<feature type="sequence variant" id="VAR_007876" description="In CGDX; dbSNP:rs137854594." evidence="6 38">
    <original>H</original>
    <variation>Y</variation>
    <location>
        <position position="101"/>
    </location>
</feature>
<feature type="sequence variant" id="VAR_007877" description="In CGDX; dbSNP:rs151344458." evidence="35">
    <original>H</original>
    <variation>R</variation>
    <location>
        <position position="119"/>
    </location>
</feature>
<feature type="sequence variant" id="VAR_002433" description="In CGDX; dbSNP:rs137854590." evidence="14 35">
    <original>A</original>
    <variation>T</variation>
    <location>
        <position position="156"/>
    </location>
</feature>
<feature type="sequence variant" id="VAR_065365" description="In IMD34; dbSNP:rs151344497." evidence="18">
    <original>T</original>
    <variation>P</variation>
    <location>
        <position position="178"/>
    </location>
</feature>
<feature type="sequence variant" id="VAR_047267" description="In CGDX; dbSNP:rs151344491." evidence="37">
    <original>G</original>
    <variation>R</variation>
    <location>
        <position position="179"/>
    </location>
</feature>
<feature type="sequence variant" id="VAR_047268" description="In CGDX; dbSNP:rs151344493." evidence="4">
    <original>S</original>
    <variation>F</variation>
    <location>
        <position position="193"/>
    </location>
</feature>
<feature type="sequence variant" id="VAR_047269" description="In CGDX; dbSNP:rs151344496." evidence="32">
    <original>F</original>
    <variation>I</variation>
    <location>
        <position position="205"/>
    </location>
</feature>
<feature type="sequence variant" id="VAR_007878" description="In CGDX; dbSNP:rs151344459." evidence="35">
    <original>H</original>
    <variation>Q</variation>
    <location>
        <position position="209"/>
    </location>
</feature>
<feature type="sequence variant" id="VAR_025616" description="In CGDX; dbSNP:rs151344482." evidence="6">
    <original>H</original>
    <variation>R</variation>
    <location>
        <position position="209"/>
    </location>
</feature>
<feature type="sequence variant" id="VAR_002434" description="In CGDX; dbSNP:rs137854587." evidence="14">
    <original>H</original>
    <variation>Y</variation>
    <location>
        <position position="209"/>
    </location>
</feature>
<feature type="sequence variant" id="VAR_007879" description="In CGDX." evidence="32 33">
    <location>
        <position position="215"/>
    </location>
</feature>
<feature type="sequence variant" id="VAR_007880" description="In CGDX; dbSNP:rs151344460." evidence="35">
    <original>H</original>
    <variation>N</variation>
    <location>
        <position position="222"/>
    </location>
</feature>
<feature type="sequence variant" id="VAR_007881" description="In CGDX; dbSNP:rs151344462." evidence="4 35">
    <original>H</original>
    <variation>R</variation>
    <location>
        <position position="222"/>
    </location>
</feature>
<feature type="sequence variant" id="VAR_007882" description="In CGDX; dbSNP:rs151344460." evidence="35">
    <original>H</original>
    <variation>Y</variation>
    <location>
        <position position="222"/>
    </location>
</feature>
<feature type="sequence variant" id="VAR_007883" description="In CGDX; requires 2 nucleotide substitutions; dbSNP:rs151344463 and dbSNP:rs151344464." evidence="35">
    <original>G</original>
    <variation>L</variation>
    <location>
        <position position="223"/>
    </location>
</feature>
<feature type="sequence variant" id="VAR_025617" description="In CGDX; dbSNP:rs151344483." evidence="6">
    <original>A</original>
    <variation>G</variation>
    <location>
        <position position="224"/>
    </location>
</feature>
<feature type="sequence variant" id="VAR_002435" description="In CGDX; dbSNP:rs151344494." evidence="39">
    <original>E</original>
    <variation>V</variation>
    <location>
        <position position="225"/>
    </location>
</feature>
<feature type="sequence variant" id="VAR_065366" description="In IMD34; dbSNP:rs151344498." evidence="18">
    <original>Q</original>
    <variation>P</variation>
    <location>
        <position position="231"/>
    </location>
</feature>
<feature type="sequence variant" id="VAR_007884" description="In CGDX; dbSNP:rs151344465." evidence="35">
    <original>C</original>
    <variation>R</variation>
    <location>
        <position position="244"/>
    </location>
</feature>
<feature type="sequence variant" id="VAR_002436" description="In CGDX; dbSNP:rs137854589." evidence="14">
    <original>C</original>
    <variation>S</variation>
    <location>
        <position position="244"/>
    </location>
</feature>
<feature type="sequence variant" id="VAR_002437" description="In CGDX; dbSNP:rs137854589." evidence="39">
    <original>C</original>
    <variation>Y</variation>
    <location>
        <position position="244"/>
    </location>
</feature>
<feature type="sequence variant" id="VAR_047270" description="In CGDX." evidence="37">
    <location>
        <begin position="298"/>
        <end position="302"/>
    </location>
</feature>
<feature type="sequence variant" id="VAR_071861" description="In CGDX." evidence="21">
    <original>K</original>
    <variation>N</variation>
    <location>
        <position position="299"/>
    </location>
</feature>
<feature type="sequence variant" id="VAR_016880" description="In CGDX; completely inhibits NADPH oxidase activity; NADPH oxidase assembly is abolished; dbSNP:rs137854595." evidence="10 13">
    <original>H</original>
    <variation>N</variation>
    <location>
        <position position="303"/>
    </location>
</feature>
<feature type="sequence variant" id="VAR_016881" description="In CGDX; reduces NADPH oxidase activity to 4% of wild-type; translocation to the membrane of the phagosome is only attenuated; dbSNP:rs137854596." evidence="10 13">
    <original>P</original>
    <variation>R</variation>
    <location>
        <position position="304"/>
    </location>
</feature>
<feature type="sequence variant" id="VAR_047271" description="In CGDX; dbSNP:rs151344489." evidence="8">
    <original>T</original>
    <variation>P</variation>
    <location>
        <position position="307"/>
    </location>
</feature>
<feature type="sequence variant" id="VAR_007885" description="In CGDX; dbSNP:rs151344466." evidence="6 35">
    <original>E</original>
    <variation>K</variation>
    <location>
        <position position="309"/>
    </location>
</feature>
<feature type="sequence variant" id="VAR_047272" description="In CGDX; dbSNP:rs2146817067." evidence="35">
    <location>
        <position position="315"/>
    </location>
</feature>
<feature type="sequence variant" id="VAR_007886" description="In CGDX; dbSNP:rs151344467." evidence="35">
    <original>G</original>
    <variation>E</variation>
    <location>
        <position position="322"/>
    </location>
</feature>
<feature type="sequence variant" id="VAR_007887" description="In CGDX; dbSNP:rs151344468." evidence="35">
    <original>I</original>
    <variation>F</variation>
    <location>
        <position position="325"/>
    </location>
</feature>
<feature type="sequence variant" id="VAR_007888" description="In CGDX; dbSNP:rs151344469." evidence="35">
    <original>S</original>
    <variation>P</variation>
    <location>
        <position position="333"/>
    </location>
</feature>
<feature type="sequence variant" id="VAR_071862" description="In CGDX." evidence="21">
    <original>H</original>
    <variation>D</variation>
    <location>
        <position position="338"/>
    </location>
</feature>
<feature type="sequence variant" id="VAR_025618" description="In CGDX; dbSNP:rs151344484." evidence="4 6">
    <original>H</original>
    <variation>Y</variation>
    <location>
        <position position="338"/>
    </location>
</feature>
<feature type="sequence variant" id="VAR_002438" description="In CGDX; dbSNP:rs151344470." evidence="4 6 21 29 35 36">
    <original>P</original>
    <variation>H</variation>
    <location>
        <position position="339"/>
    </location>
</feature>
<feature type="sequence variant" id="VAR_047273" description="In CGDX; dbSNP:rs151344495." evidence="32">
    <original>L</original>
    <variation>Q</variation>
    <location>
        <position position="342"/>
    </location>
</feature>
<feature type="sequence variant" id="VAR_025619" description="In CGDX; dbSNP:rs151344485." evidence="6 21 36">
    <original>S</original>
    <variation>F</variation>
    <location>
        <position position="344"/>
    </location>
</feature>
<feature type="sequence variant" id="VAR_007889" description="In CGDX; dbSNP:rs151344471." evidence="35">
    <original>R</original>
    <variation>P</variation>
    <location>
        <position position="356"/>
    </location>
</feature>
<feature type="sequence variant" id="VAR_025620" description="In dbSNP:rs141756032." evidence="4 12">
    <original>G</original>
    <variation>R</variation>
    <location>
        <position position="364"/>
    </location>
</feature>
<feature type="sequence variant" id="VAR_002439" description="In CGDX; dbSNP:rs137854586." evidence="14">
    <original>G</original>
    <variation>A</variation>
    <location>
        <position position="389"/>
    </location>
</feature>
<feature type="sequence variant" id="VAR_025621" description="In CGDX; dbSNP:rs137854586." evidence="6">
    <original>G</original>
    <variation>E</variation>
    <location>
        <position position="389"/>
    </location>
</feature>
<feature type="sequence variant" id="VAR_007890" description="In CGDX; dbSNP:rs151344472." evidence="35">
    <original>M</original>
    <variation>R</variation>
    <location>
        <position position="405"/>
    </location>
</feature>
<feature type="sequence variant" id="VAR_007891" description="In CGDX; dbSNP:rs151344474." evidence="35">
    <original>G</original>
    <variation>E</variation>
    <location>
        <position position="408"/>
    </location>
</feature>
<feature type="sequence variant" id="VAR_007892" description="In CGDX; dbSNP:rs151344473." evidence="15 35">
    <original>G</original>
    <variation>R</variation>
    <location>
        <position position="408"/>
    </location>
</feature>
<feature type="sequence variant" id="VAR_078386" description="In CGDX." evidence="23">
    <original>A</original>
    <variation>G</variation>
    <location>
        <position position="409"/>
    </location>
</feature>
<feature type="sequence variant" id="VAR_071863" description="In CGDX." evidence="21">
    <original>G</original>
    <variation>E</variation>
    <location>
        <position position="412"/>
    </location>
</feature>
<feature type="sequence variant" id="VAR_002440" description="In CGDX; dbSNP:rs137854585." evidence="22 35">
    <original>P</original>
    <variation>H</variation>
    <location>
        <position position="415"/>
    </location>
</feature>
<feature type="sequence variant" id="VAR_007893" description="In CGDX; dbSNP:rs137854585." evidence="35">
    <original>P</original>
    <variation>L</variation>
    <location>
        <position position="415"/>
    </location>
</feature>
<feature type="sequence variant" id="VAR_025622" description="In CGDX; dbSNP:rs151344486." evidence="6">
    <original>L</original>
    <variation>P</variation>
    <location>
        <position position="420"/>
    </location>
</feature>
<feature type="sequence variant" id="VAR_007894" description="In CGDX; dbSNP:rs151344475." evidence="35">
    <original>S</original>
    <variation>P</variation>
    <location>
        <position position="422"/>
    </location>
</feature>
<feature type="sequence variant" id="VAR_007895" description="In CGDX; dbSNP:rs151344476." evidence="35">
    <original>W</original>
    <variation>R</variation>
    <location>
        <position position="453"/>
    </location>
</feature>
<feature type="sequence variant" id="VAR_047274" description="In dbSNP:rs13306300.">
    <original>G</original>
    <variation>S</variation>
    <location>
        <position position="472"/>
    </location>
</feature>
<feature type="sequence variant" id="VAR_068012" description="In CGDX." evidence="19">
    <original>A</original>
    <variation>D</variation>
    <location>
        <position position="488"/>
    </location>
</feature>
<feature type="sequence variant" id="VAR_068013" description="In CGDX." evidence="19">
    <original>D</original>
    <variation>E</variation>
    <location>
        <position position="500"/>
    </location>
</feature>
<feature type="sequence variant" id="VAR_002441" description="In CGDX; dbSNP:rs137854593." evidence="31">
    <original>D</original>
    <variation>G</variation>
    <location>
        <position position="500"/>
    </location>
</feature>
<feature type="sequence variant" id="VAR_047275" description="In CGDX; dbSNP:rs151344490." evidence="8">
    <original>L</original>
    <variation>R</variation>
    <location>
        <position position="505"/>
    </location>
</feature>
<feature type="sequence variant" id="VAR_007896" description="In CGDX; dbSNP:rs151344477." evidence="35">
    <original>W</original>
    <variation>C</variation>
    <location>
        <position position="516"/>
    </location>
</feature>
<feature type="sequence variant" id="VAR_025623" description="In CGDX; dbSNP:rs151344487." evidence="6">
    <original>W</original>
    <variation>R</variation>
    <location>
        <position position="516"/>
    </location>
</feature>
<feature type="sequence variant" id="VAR_025624" description="In dbSNP:rs151344452." evidence="12">
    <original>D</original>
    <variation>E</variation>
    <location>
        <position position="517"/>
    </location>
</feature>
<feature type="sequence variant" id="VAR_007897" description="In CGDX; dbSNP:rs151344478." evidence="35">
    <original>V</original>
    <variation>D</variation>
    <location>
        <position position="534"/>
    </location>
</feature>
<feature type="sequence variant" id="VAR_007898" description="In CGDX; dbSNP:rs151344454." evidence="12 35">
    <original>C</original>
    <variation>R</variation>
    <location>
        <position position="537"/>
    </location>
</feature>
<feature type="sequence variant" id="VAR_047276" description="In CGDX; dbSNP:rs151344492." evidence="4">
    <original>L</original>
    <variation>P</variation>
    <location>
        <position position="546"/>
    </location>
</feature>
<feature type="mutagenesis site" description="Moderately decreases superoxide-generating NADPH oxidase activity." evidence="28">
    <original>F</original>
    <variation>A</variation>
    <location>
        <position position="570"/>
    </location>
</feature>
<feature type="mutagenesis site" description="Moderately decreases superoxide-generating NADPH oxidase activity." evidence="28">
    <original>F</original>
    <variation>G</variation>
    <location>
        <position position="570"/>
    </location>
</feature>
<feature type="sequence conflict" description="In Ref. 7; CAA27635 and 5; EAW59453." evidence="40" ref="7 5">
    <original>V</original>
    <variation>A</variation>
    <location>
        <position position="14"/>
    </location>
</feature>
<feature type="helix" evidence="49">
    <location>
        <begin position="5"/>
        <end position="32"/>
    </location>
</feature>
<feature type="helix" evidence="49">
    <location>
        <begin position="37"/>
        <end position="39"/>
    </location>
</feature>
<feature type="helix" evidence="49">
    <location>
        <begin position="40"/>
        <end position="46"/>
    </location>
</feature>
<feature type="helix" evidence="49">
    <location>
        <begin position="49"/>
        <end position="67"/>
    </location>
</feature>
<feature type="turn" evidence="50">
    <location>
        <begin position="69"/>
        <end position="71"/>
    </location>
</feature>
<feature type="helix" evidence="49">
    <location>
        <begin position="73"/>
        <end position="82"/>
    </location>
</feature>
<feature type="helix" evidence="49">
    <location>
        <begin position="88"/>
        <end position="93"/>
    </location>
</feature>
<feature type="helix" evidence="49">
    <location>
        <begin position="94"/>
        <end position="96"/>
    </location>
</feature>
<feature type="helix" evidence="49">
    <location>
        <begin position="97"/>
        <end position="130"/>
    </location>
</feature>
<feature type="helix" evidence="49">
    <location>
        <begin position="136"/>
        <end position="143"/>
    </location>
</feature>
<feature type="helix" evidence="49">
    <location>
        <begin position="164"/>
        <end position="172"/>
    </location>
</feature>
<feature type="helix" evidence="49">
    <location>
        <begin position="174"/>
        <end position="192"/>
    </location>
</feature>
<feature type="helix" evidence="49">
    <location>
        <begin position="195"/>
        <end position="200"/>
    </location>
</feature>
<feature type="helix" evidence="49">
    <location>
        <begin position="202"/>
        <end position="209"/>
    </location>
</feature>
<feature type="helix" evidence="49">
    <location>
        <begin position="212"/>
        <end position="220"/>
    </location>
</feature>
<feature type="turn" evidence="49">
    <location>
        <begin position="221"/>
        <end position="225"/>
    </location>
</feature>
<feature type="strand" evidence="49">
    <location>
        <begin position="228"/>
        <end position="231"/>
    </location>
</feature>
<feature type="helix" evidence="49">
    <location>
        <begin position="233"/>
        <end position="238"/>
    </location>
</feature>
<feature type="helix" evidence="49">
    <location>
        <begin position="241"/>
        <end position="244"/>
    </location>
</feature>
<feature type="helix" evidence="49">
    <location>
        <begin position="248"/>
        <end position="250"/>
    </location>
</feature>
<feature type="turn" evidence="49">
    <location>
        <begin position="251"/>
        <end position="253"/>
    </location>
</feature>
<feature type="strand" evidence="49">
    <location>
        <begin position="262"/>
        <end position="264"/>
    </location>
</feature>
<feature type="helix" evidence="49">
    <location>
        <begin position="269"/>
        <end position="292"/>
    </location>
</feature>
<feature type="strand" evidence="49">
    <location>
        <begin position="296"/>
        <end position="303"/>
    </location>
</feature>
<feature type="turn" evidence="49">
    <location>
        <begin position="304"/>
        <end position="306"/>
    </location>
</feature>
<feature type="strand" evidence="49">
    <location>
        <begin position="307"/>
        <end position="313"/>
    </location>
</feature>
<feature type="strand" evidence="49">
    <location>
        <begin position="324"/>
        <end position="328"/>
    </location>
</feature>
<feature type="turn" evidence="49">
    <location>
        <begin position="330"/>
        <end position="332"/>
    </location>
</feature>
<feature type="strand" evidence="49">
    <location>
        <begin position="338"/>
        <end position="342"/>
    </location>
</feature>
<feature type="strand" evidence="49">
    <location>
        <begin position="348"/>
        <end position="356"/>
    </location>
</feature>
<feature type="helix" evidence="49">
    <location>
        <begin position="360"/>
        <end position="368"/>
    </location>
</feature>
<feature type="helix" evidence="49">
    <location>
        <begin position="379"/>
        <end position="381"/>
    </location>
</feature>
<feature type="strand" evidence="49">
    <location>
        <begin position="386"/>
        <end position="391"/>
    </location>
</feature>
<feature type="helix" evidence="48">
    <location>
        <begin position="393"/>
        <end position="398"/>
    </location>
</feature>
<feature type="strand" evidence="48">
    <location>
        <begin position="401"/>
        <end position="409"/>
    </location>
</feature>
<feature type="helix" evidence="48">
    <location>
        <begin position="410"/>
        <end position="412"/>
    </location>
</feature>
<feature type="helix" evidence="48">
    <location>
        <begin position="413"/>
        <end position="429"/>
    </location>
</feature>
<feature type="strand" evidence="50">
    <location>
        <begin position="431"/>
        <end position="433"/>
    </location>
</feature>
<feature type="strand" evidence="48">
    <location>
        <begin position="438"/>
        <end position="446"/>
    </location>
</feature>
<feature type="turn" evidence="48">
    <location>
        <begin position="448"/>
        <end position="451"/>
    </location>
</feature>
<feature type="helix" evidence="48">
    <location>
        <begin position="452"/>
        <end position="467"/>
    </location>
</feature>
<feature type="strand" evidence="48">
    <location>
        <begin position="473"/>
        <end position="480"/>
    </location>
</feature>
<feature type="helix" evidence="49">
    <location>
        <begin position="485"/>
        <end position="493"/>
    </location>
</feature>
<feature type="strand" evidence="49">
    <location>
        <begin position="501"/>
        <end position="503"/>
    </location>
</feature>
<feature type="strand" evidence="48">
    <location>
        <begin position="509"/>
        <end position="512"/>
    </location>
</feature>
<feature type="helix" evidence="48">
    <location>
        <begin position="516"/>
        <end position="526"/>
    </location>
</feature>
<feature type="strand" evidence="48">
    <location>
        <begin position="531"/>
        <end position="538"/>
    </location>
</feature>
<feature type="helix" evidence="48">
    <location>
        <begin position="540"/>
        <end position="552"/>
    </location>
</feature>
<feature type="strand" evidence="49">
    <location>
        <begin position="556"/>
        <end position="560"/>
    </location>
</feature>
<feature type="strand" evidence="48">
    <location>
        <begin position="562"/>
        <end position="566"/>
    </location>
</feature>
<keyword id="KW-0002">3D-structure</keyword>
<keyword id="KW-1003">Cell membrane</keyword>
<keyword id="KW-0161">Chronic granulomatous disease</keyword>
<keyword id="KW-0903">Direct protein sequencing</keyword>
<keyword id="KW-0225">Disease variant</keyword>
<keyword id="KW-0249">Electron transport</keyword>
<keyword id="KW-0274">FAD</keyword>
<keyword id="KW-0285">Flavoprotein</keyword>
<keyword id="KW-0325">Glycoprotein</keyword>
<keyword id="KW-0349">Heme</keyword>
<keyword id="KW-0407">Ion channel</keyword>
<keyword id="KW-0406">Ion transport</keyword>
<keyword id="KW-0408">Iron</keyword>
<keyword id="KW-1017">Isopeptide bond</keyword>
<keyword id="KW-0472">Membrane</keyword>
<keyword id="KW-0479">Metal-binding</keyword>
<keyword id="KW-0521">NADP</keyword>
<keyword id="KW-0560">Oxidoreductase</keyword>
<keyword id="KW-0597">Phosphoprotein</keyword>
<keyword id="KW-1267">Proteomics identification</keyword>
<keyword id="KW-1185">Reference proteome</keyword>
<keyword id="KW-0812">Transmembrane</keyword>
<keyword id="KW-1133">Transmembrane helix</keyword>
<keyword id="KW-0813">Transport</keyword>
<keyword id="KW-0832">Ubl conjugation</keyword>
<keyword id="KW-0851">Voltage-gated channel</keyword>
<name>CY24B_HUMAN</name>
<organism>
    <name type="scientific">Homo sapiens</name>
    <name type="common">Human</name>
    <dbReference type="NCBI Taxonomy" id="9606"/>
    <lineage>
        <taxon>Eukaryota</taxon>
        <taxon>Metazoa</taxon>
        <taxon>Chordata</taxon>
        <taxon>Craniata</taxon>
        <taxon>Vertebrata</taxon>
        <taxon>Euteleostomi</taxon>
        <taxon>Mammalia</taxon>
        <taxon>Eutheria</taxon>
        <taxon>Euarchontoglires</taxon>
        <taxon>Primates</taxon>
        <taxon>Haplorrhini</taxon>
        <taxon>Catarrhini</taxon>
        <taxon>Hominidae</taxon>
        <taxon>Homo</taxon>
    </lineage>
</organism>
<reference key="1">
    <citation type="journal article" date="2002" name="Clin. Immunol.">
        <title>CYBB mutation analysis in X-linked chronic granulomatous disease.</title>
        <authorList>
            <person name="Jirapongsananuruk O."/>
            <person name="Niemela J.E."/>
            <person name="Malech H.L."/>
            <person name="Fleisher T.A."/>
        </authorList>
    </citation>
    <scope>NUCLEOTIDE SEQUENCE [GENOMIC DNA]</scope>
    <scope>VARIANTS CGDX ASP-41 AND ARG-537</scope>
    <scope>VARIANTS ARG-364 AND GLU-517</scope>
</reference>
<reference key="2">
    <citation type="journal article" date="2004" name="Nat. Genet.">
        <title>Complete sequencing and characterization of 21,243 full-length human cDNAs.</title>
        <authorList>
            <person name="Ota T."/>
            <person name="Suzuki Y."/>
            <person name="Nishikawa T."/>
            <person name="Otsuki T."/>
            <person name="Sugiyama T."/>
            <person name="Irie R."/>
            <person name="Wakamatsu A."/>
            <person name="Hayashi K."/>
            <person name="Sato H."/>
            <person name="Nagai K."/>
            <person name="Kimura K."/>
            <person name="Makita H."/>
            <person name="Sekine M."/>
            <person name="Obayashi M."/>
            <person name="Nishi T."/>
            <person name="Shibahara T."/>
            <person name="Tanaka T."/>
            <person name="Ishii S."/>
            <person name="Yamamoto J."/>
            <person name="Saito K."/>
            <person name="Kawai Y."/>
            <person name="Isono Y."/>
            <person name="Nakamura Y."/>
            <person name="Nagahari K."/>
            <person name="Murakami K."/>
            <person name="Yasuda T."/>
            <person name="Iwayanagi T."/>
            <person name="Wagatsuma M."/>
            <person name="Shiratori A."/>
            <person name="Sudo H."/>
            <person name="Hosoiri T."/>
            <person name="Kaku Y."/>
            <person name="Kodaira H."/>
            <person name="Kondo H."/>
            <person name="Sugawara M."/>
            <person name="Takahashi M."/>
            <person name="Kanda K."/>
            <person name="Yokoi T."/>
            <person name="Furuya T."/>
            <person name="Kikkawa E."/>
            <person name="Omura Y."/>
            <person name="Abe K."/>
            <person name="Kamihara K."/>
            <person name="Katsuta N."/>
            <person name="Sato K."/>
            <person name="Tanikawa M."/>
            <person name="Yamazaki M."/>
            <person name="Ninomiya K."/>
            <person name="Ishibashi T."/>
            <person name="Yamashita H."/>
            <person name="Murakawa K."/>
            <person name="Fujimori K."/>
            <person name="Tanai H."/>
            <person name="Kimata M."/>
            <person name="Watanabe M."/>
            <person name="Hiraoka S."/>
            <person name="Chiba Y."/>
            <person name="Ishida S."/>
            <person name="Ono Y."/>
            <person name="Takiguchi S."/>
            <person name="Watanabe S."/>
            <person name="Yosida M."/>
            <person name="Hotuta T."/>
            <person name="Kusano J."/>
            <person name="Kanehori K."/>
            <person name="Takahashi-Fujii A."/>
            <person name="Hara H."/>
            <person name="Tanase T.-O."/>
            <person name="Nomura Y."/>
            <person name="Togiya S."/>
            <person name="Komai F."/>
            <person name="Hara R."/>
            <person name="Takeuchi K."/>
            <person name="Arita M."/>
            <person name="Imose N."/>
            <person name="Musashino K."/>
            <person name="Yuuki H."/>
            <person name="Oshima A."/>
            <person name="Sasaki N."/>
            <person name="Aotsuka S."/>
            <person name="Yoshikawa Y."/>
            <person name="Matsunawa H."/>
            <person name="Ichihara T."/>
            <person name="Shiohata N."/>
            <person name="Sano S."/>
            <person name="Moriya S."/>
            <person name="Momiyama H."/>
            <person name="Satoh N."/>
            <person name="Takami S."/>
            <person name="Terashima Y."/>
            <person name="Suzuki O."/>
            <person name="Nakagawa S."/>
            <person name="Senoh A."/>
            <person name="Mizoguchi H."/>
            <person name="Goto Y."/>
            <person name="Shimizu F."/>
            <person name="Wakebe H."/>
            <person name="Hishigaki H."/>
            <person name="Watanabe T."/>
            <person name="Sugiyama A."/>
            <person name="Takemoto M."/>
            <person name="Kawakami B."/>
            <person name="Yamazaki M."/>
            <person name="Watanabe K."/>
            <person name="Kumagai A."/>
            <person name="Itakura S."/>
            <person name="Fukuzumi Y."/>
            <person name="Fujimori Y."/>
            <person name="Komiyama M."/>
            <person name="Tashiro H."/>
            <person name="Tanigami A."/>
            <person name="Fujiwara T."/>
            <person name="Ono T."/>
            <person name="Yamada K."/>
            <person name="Fujii Y."/>
            <person name="Ozaki K."/>
            <person name="Hirao M."/>
            <person name="Ohmori Y."/>
            <person name="Kawabata A."/>
            <person name="Hikiji T."/>
            <person name="Kobatake N."/>
            <person name="Inagaki H."/>
            <person name="Ikema Y."/>
            <person name="Okamoto S."/>
            <person name="Okitani R."/>
            <person name="Kawakami T."/>
            <person name="Noguchi S."/>
            <person name="Itoh T."/>
            <person name="Shigeta K."/>
            <person name="Senba T."/>
            <person name="Matsumura K."/>
            <person name="Nakajima Y."/>
            <person name="Mizuno T."/>
            <person name="Morinaga M."/>
            <person name="Sasaki M."/>
            <person name="Togashi T."/>
            <person name="Oyama M."/>
            <person name="Hata H."/>
            <person name="Watanabe M."/>
            <person name="Komatsu T."/>
            <person name="Mizushima-Sugano J."/>
            <person name="Satoh T."/>
            <person name="Shirai Y."/>
            <person name="Takahashi Y."/>
            <person name="Nakagawa K."/>
            <person name="Okumura K."/>
            <person name="Nagase T."/>
            <person name="Nomura N."/>
            <person name="Kikuchi H."/>
            <person name="Masuho Y."/>
            <person name="Yamashita R."/>
            <person name="Nakai K."/>
            <person name="Yada T."/>
            <person name="Nakamura Y."/>
            <person name="Ohara O."/>
            <person name="Isogai T."/>
            <person name="Sugano S."/>
        </authorList>
    </citation>
    <scope>NUCLEOTIDE SEQUENCE [LARGE SCALE MRNA]</scope>
    <source>
        <tissue>Brain</tissue>
    </source>
</reference>
<reference key="3">
    <citation type="submission" date="2005-12" db="EMBL/GenBank/DDBJ databases">
        <authorList>
            <consortium name="NHLBI resequencing and genotyping service (RS&amp;G)"/>
        </authorList>
    </citation>
    <scope>NUCLEOTIDE SEQUENCE [GENOMIC DNA]</scope>
</reference>
<reference key="4">
    <citation type="journal article" date="2005" name="Nature">
        <title>The DNA sequence of the human X chromosome.</title>
        <authorList>
            <person name="Ross M.T."/>
            <person name="Grafham D.V."/>
            <person name="Coffey A.J."/>
            <person name="Scherer S."/>
            <person name="McLay K."/>
            <person name="Muzny D."/>
            <person name="Platzer M."/>
            <person name="Howell G.R."/>
            <person name="Burrows C."/>
            <person name="Bird C.P."/>
            <person name="Frankish A."/>
            <person name="Lovell F.L."/>
            <person name="Howe K.L."/>
            <person name="Ashurst J.L."/>
            <person name="Fulton R.S."/>
            <person name="Sudbrak R."/>
            <person name="Wen G."/>
            <person name="Jones M.C."/>
            <person name="Hurles M.E."/>
            <person name="Andrews T.D."/>
            <person name="Scott C.E."/>
            <person name="Searle S."/>
            <person name="Ramser J."/>
            <person name="Whittaker A."/>
            <person name="Deadman R."/>
            <person name="Carter N.P."/>
            <person name="Hunt S.E."/>
            <person name="Chen R."/>
            <person name="Cree A."/>
            <person name="Gunaratne P."/>
            <person name="Havlak P."/>
            <person name="Hodgson A."/>
            <person name="Metzker M.L."/>
            <person name="Richards S."/>
            <person name="Scott G."/>
            <person name="Steffen D."/>
            <person name="Sodergren E."/>
            <person name="Wheeler D.A."/>
            <person name="Worley K.C."/>
            <person name="Ainscough R."/>
            <person name="Ambrose K.D."/>
            <person name="Ansari-Lari M.A."/>
            <person name="Aradhya S."/>
            <person name="Ashwell R.I."/>
            <person name="Babbage A.K."/>
            <person name="Bagguley C.L."/>
            <person name="Ballabio A."/>
            <person name="Banerjee R."/>
            <person name="Barker G.E."/>
            <person name="Barlow K.F."/>
            <person name="Barrett I.P."/>
            <person name="Bates K.N."/>
            <person name="Beare D.M."/>
            <person name="Beasley H."/>
            <person name="Beasley O."/>
            <person name="Beck A."/>
            <person name="Bethel G."/>
            <person name="Blechschmidt K."/>
            <person name="Brady N."/>
            <person name="Bray-Allen S."/>
            <person name="Bridgeman A.M."/>
            <person name="Brown A.J."/>
            <person name="Brown M.J."/>
            <person name="Bonnin D."/>
            <person name="Bruford E.A."/>
            <person name="Buhay C."/>
            <person name="Burch P."/>
            <person name="Burford D."/>
            <person name="Burgess J."/>
            <person name="Burrill W."/>
            <person name="Burton J."/>
            <person name="Bye J.M."/>
            <person name="Carder C."/>
            <person name="Carrel L."/>
            <person name="Chako J."/>
            <person name="Chapman J.C."/>
            <person name="Chavez D."/>
            <person name="Chen E."/>
            <person name="Chen G."/>
            <person name="Chen Y."/>
            <person name="Chen Z."/>
            <person name="Chinault C."/>
            <person name="Ciccodicola A."/>
            <person name="Clark S.Y."/>
            <person name="Clarke G."/>
            <person name="Clee C.M."/>
            <person name="Clegg S."/>
            <person name="Clerc-Blankenburg K."/>
            <person name="Clifford K."/>
            <person name="Cobley V."/>
            <person name="Cole C.G."/>
            <person name="Conquer J.S."/>
            <person name="Corby N."/>
            <person name="Connor R.E."/>
            <person name="David R."/>
            <person name="Davies J."/>
            <person name="Davis C."/>
            <person name="Davis J."/>
            <person name="Delgado O."/>
            <person name="Deshazo D."/>
            <person name="Dhami P."/>
            <person name="Ding Y."/>
            <person name="Dinh H."/>
            <person name="Dodsworth S."/>
            <person name="Draper H."/>
            <person name="Dugan-Rocha S."/>
            <person name="Dunham A."/>
            <person name="Dunn M."/>
            <person name="Durbin K.J."/>
            <person name="Dutta I."/>
            <person name="Eades T."/>
            <person name="Ellwood M."/>
            <person name="Emery-Cohen A."/>
            <person name="Errington H."/>
            <person name="Evans K.L."/>
            <person name="Faulkner L."/>
            <person name="Francis F."/>
            <person name="Frankland J."/>
            <person name="Fraser A.E."/>
            <person name="Galgoczy P."/>
            <person name="Gilbert J."/>
            <person name="Gill R."/>
            <person name="Gloeckner G."/>
            <person name="Gregory S.G."/>
            <person name="Gribble S."/>
            <person name="Griffiths C."/>
            <person name="Grocock R."/>
            <person name="Gu Y."/>
            <person name="Gwilliam R."/>
            <person name="Hamilton C."/>
            <person name="Hart E.A."/>
            <person name="Hawes A."/>
            <person name="Heath P.D."/>
            <person name="Heitmann K."/>
            <person name="Hennig S."/>
            <person name="Hernandez J."/>
            <person name="Hinzmann B."/>
            <person name="Ho S."/>
            <person name="Hoffs M."/>
            <person name="Howden P.J."/>
            <person name="Huckle E.J."/>
            <person name="Hume J."/>
            <person name="Hunt P.J."/>
            <person name="Hunt A.R."/>
            <person name="Isherwood J."/>
            <person name="Jacob L."/>
            <person name="Johnson D."/>
            <person name="Jones S."/>
            <person name="de Jong P.J."/>
            <person name="Joseph S.S."/>
            <person name="Keenan S."/>
            <person name="Kelly S."/>
            <person name="Kershaw J.K."/>
            <person name="Khan Z."/>
            <person name="Kioschis P."/>
            <person name="Klages S."/>
            <person name="Knights A.J."/>
            <person name="Kosiura A."/>
            <person name="Kovar-Smith C."/>
            <person name="Laird G.K."/>
            <person name="Langford C."/>
            <person name="Lawlor S."/>
            <person name="Leversha M."/>
            <person name="Lewis L."/>
            <person name="Liu W."/>
            <person name="Lloyd C."/>
            <person name="Lloyd D.M."/>
            <person name="Loulseged H."/>
            <person name="Loveland J.E."/>
            <person name="Lovell J.D."/>
            <person name="Lozado R."/>
            <person name="Lu J."/>
            <person name="Lyne R."/>
            <person name="Ma J."/>
            <person name="Maheshwari M."/>
            <person name="Matthews L.H."/>
            <person name="McDowall J."/>
            <person name="McLaren S."/>
            <person name="McMurray A."/>
            <person name="Meidl P."/>
            <person name="Meitinger T."/>
            <person name="Milne S."/>
            <person name="Miner G."/>
            <person name="Mistry S.L."/>
            <person name="Morgan M."/>
            <person name="Morris S."/>
            <person name="Mueller I."/>
            <person name="Mullikin J.C."/>
            <person name="Nguyen N."/>
            <person name="Nordsiek G."/>
            <person name="Nyakatura G."/>
            <person name="O'dell C.N."/>
            <person name="Okwuonu G."/>
            <person name="Palmer S."/>
            <person name="Pandian R."/>
            <person name="Parker D."/>
            <person name="Parrish J."/>
            <person name="Pasternak S."/>
            <person name="Patel D."/>
            <person name="Pearce A.V."/>
            <person name="Pearson D.M."/>
            <person name="Pelan S.E."/>
            <person name="Perez L."/>
            <person name="Porter K.M."/>
            <person name="Ramsey Y."/>
            <person name="Reichwald K."/>
            <person name="Rhodes S."/>
            <person name="Ridler K.A."/>
            <person name="Schlessinger D."/>
            <person name="Schueler M.G."/>
            <person name="Sehra H.K."/>
            <person name="Shaw-Smith C."/>
            <person name="Shen H."/>
            <person name="Sheridan E.M."/>
            <person name="Shownkeen R."/>
            <person name="Skuce C.D."/>
            <person name="Smith M.L."/>
            <person name="Sotheran E.C."/>
            <person name="Steingruber H.E."/>
            <person name="Steward C.A."/>
            <person name="Storey R."/>
            <person name="Swann R.M."/>
            <person name="Swarbreck D."/>
            <person name="Tabor P.E."/>
            <person name="Taudien S."/>
            <person name="Taylor T."/>
            <person name="Teague B."/>
            <person name="Thomas K."/>
            <person name="Thorpe A."/>
            <person name="Timms K."/>
            <person name="Tracey A."/>
            <person name="Trevanion S."/>
            <person name="Tromans A.C."/>
            <person name="d'Urso M."/>
            <person name="Verduzco D."/>
            <person name="Villasana D."/>
            <person name="Waldron L."/>
            <person name="Wall M."/>
            <person name="Wang Q."/>
            <person name="Warren J."/>
            <person name="Warry G.L."/>
            <person name="Wei X."/>
            <person name="West A."/>
            <person name="Whitehead S.L."/>
            <person name="Whiteley M.N."/>
            <person name="Wilkinson J.E."/>
            <person name="Willey D.L."/>
            <person name="Williams G."/>
            <person name="Williams L."/>
            <person name="Williamson A."/>
            <person name="Williamson H."/>
            <person name="Wilming L."/>
            <person name="Woodmansey R.L."/>
            <person name="Wray P.W."/>
            <person name="Yen J."/>
            <person name="Zhang J."/>
            <person name="Zhou J."/>
            <person name="Zoghbi H."/>
            <person name="Zorilla S."/>
            <person name="Buck D."/>
            <person name="Reinhardt R."/>
            <person name="Poustka A."/>
            <person name="Rosenthal A."/>
            <person name="Lehrach H."/>
            <person name="Meindl A."/>
            <person name="Minx P.J."/>
            <person name="Hillier L.W."/>
            <person name="Willard H.F."/>
            <person name="Wilson R.K."/>
            <person name="Waterston R.H."/>
            <person name="Rice C.M."/>
            <person name="Vaudin M."/>
            <person name="Coulson A."/>
            <person name="Nelson D.L."/>
            <person name="Weinstock G."/>
            <person name="Sulston J.E."/>
            <person name="Durbin R.M."/>
            <person name="Hubbard T."/>
            <person name="Gibbs R.A."/>
            <person name="Beck S."/>
            <person name="Rogers J."/>
            <person name="Bentley D.R."/>
        </authorList>
    </citation>
    <scope>NUCLEOTIDE SEQUENCE [LARGE SCALE GENOMIC DNA]</scope>
</reference>
<reference key="5">
    <citation type="submission" date="2005-09" db="EMBL/GenBank/DDBJ databases">
        <authorList>
            <person name="Mural R.J."/>
            <person name="Istrail S."/>
            <person name="Sutton G.G."/>
            <person name="Florea L."/>
            <person name="Halpern A.L."/>
            <person name="Mobarry C.M."/>
            <person name="Lippert R."/>
            <person name="Walenz B."/>
            <person name="Shatkay H."/>
            <person name="Dew I."/>
            <person name="Miller J.R."/>
            <person name="Flanigan M.J."/>
            <person name="Edwards N.J."/>
            <person name="Bolanos R."/>
            <person name="Fasulo D."/>
            <person name="Halldorsson B.V."/>
            <person name="Hannenhalli S."/>
            <person name="Turner R."/>
            <person name="Yooseph S."/>
            <person name="Lu F."/>
            <person name="Nusskern D.R."/>
            <person name="Shue B.C."/>
            <person name="Zheng X.H."/>
            <person name="Zhong F."/>
            <person name="Delcher A.L."/>
            <person name="Huson D.H."/>
            <person name="Kravitz S.A."/>
            <person name="Mouchard L."/>
            <person name="Reinert K."/>
            <person name="Remington K.A."/>
            <person name="Clark A.G."/>
            <person name="Waterman M.S."/>
            <person name="Eichler E.E."/>
            <person name="Adams M.D."/>
            <person name="Hunkapiller M.W."/>
            <person name="Myers E.W."/>
            <person name="Venter J.C."/>
        </authorList>
    </citation>
    <scope>NUCLEOTIDE SEQUENCE [LARGE SCALE GENOMIC DNA]</scope>
</reference>
<reference key="6">
    <citation type="journal article" date="2004" name="Genome Res.">
        <title>The status, quality, and expansion of the NIH full-length cDNA project: the Mammalian Gene Collection (MGC).</title>
        <authorList>
            <consortium name="The MGC Project Team"/>
        </authorList>
    </citation>
    <scope>NUCLEOTIDE SEQUENCE [LARGE SCALE MRNA]</scope>
    <source>
        <tissue>Lymph</tissue>
    </source>
</reference>
<reference key="7">
    <citation type="journal article" date="1986" name="Nature">
        <title>Cloning the gene for an inherited human disorder -- chronic granulomatous disease -- on the basis of its chromosomal location.</title>
        <authorList>
            <person name="Royer-Pokora B."/>
            <person name="Kunkel L.M."/>
            <person name="Monaco A.P."/>
            <person name="Goff S.C."/>
            <person name="Newburger P.E."/>
            <person name="Baehner R.L."/>
            <person name="Cole F.S."/>
            <person name="Curnutte J.T."/>
            <person name="Orkin S.H."/>
        </authorList>
    </citation>
    <scope>NUCLEOTIDE SEQUENCE [MRNA] OF 2-570</scope>
</reference>
<reference key="8">
    <citation type="journal article" date="1987" name="Nature">
        <title>The glycoprotein encoded by the X-linked chronic granulomatous disease locus is a component of the neutrophil cytochrome b complex.</title>
        <authorList>
            <person name="Dinauer M.C."/>
            <person name="Orkin S.H."/>
            <person name="Brown R."/>
            <person name="Jesaitis A.J."/>
            <person name="Parkos C.A."/>
        </authorList>
    </citation>
    <scope>NUCLEOTIDE SEQUENCE [GENOMIC DNA] OF 1-135</scope>
</reference>
<reference key="9">
    <citation type="journal article" date="1998" name="Genomics">
        <title>Nonhomologous recombination between the cytochrome b558 heavy chain gene (CYBB) and LINE-1 causes an X-linked chronic granulomatous disease.</title>
        <authorList>
            <person name="Kumatori A."/>
            <person name="Faizunnessa N.N."/>
            <person name="Suzuki S."/>
            <person name="Moriuchi T."/>
            <person name="Kurozumi H."/>
            <person name="Nakamura M."/>
        </authorList>
    </citation>
    <scope>NUCLEOTIDE SEQUENCE [GENOMIC DNA] OF 233-267</scope>
    <source>
        <tissue>Peripheral blood</tissue>
    </source>
</reference>
<reference key="10">
    <citation type="journal article" date="1987" name="Nature">
        <title>The X-linked chronic granulomatous disease gene codes for the beta-chain of cytochrome b-245.</title>
        <authorList>
            <person name="Teahan C."/>
            <person name="Rowe P."/>
            <person name="Parker P."/>
            <person name="Totty N."/>
            <person name="Segal A.W."/>
        </authorList>
    </citation>
    <scope>PROTEIN SEQUENCE OF 2-44</scope>
    <scope>SUBUNIT</scope>
</reference>
<reference key="11">
    <citation type="journal article" date="1999" name="J. Gen. Physiol.">
        <title>Evidence that the product of the human X-linked CGD gene, gp91-phox, is a voltage-gated H(+) pathway.</title>
        <authorList>
            <person name="Henderson L.M."/>
            <person name="Meech R.W."/>
        </authorList>
    </citation>
    <scope>FUNCTION</scope>
</reference>
<reference key="12">
    <citation type="journal article" date="2001" name="J. Biol. Chem.">
        <title>The gp91phox component of NADPH oxidase is not the voltage-gated proton channel in phagocytes, but it helps.</title>
        <authorList>
            <person name="DeCoursey T.E."/>
            <person name="Cherny V.V."/>
            <person name="Morgan D."/>
            <person name="Katz B.Z."/>
            <person name="Dinauer M.C."/>
        </authorList>
    </citation>
    <scope>FUNCTION</scope>
</reference>
<reference key="13">
    <citation type="journal article" date="2002" name="J. Gen. Physiol.">
        <title>Absence of proton channels in COS-7 cells expressing functional NADPH oxidase components.</title>
        <authorList>
            <person name="Morgan D."/>
            <person name="Cherny V.V."/>
            <person name="Price M.O."/>
            <person name="Dinauer M.C."/>
            <person name="DeCoursey T.E."/>
        </authorList>
    </citation>
    <scope>FUNCTION</scope>
</reference>
<reference key="14">
    <citation type="journal article" date="2009" name="FASEB J.">
        <title>Regulation of the phagocyte NADPH oxidase activity: phosphorylation of gp91phox/NOX2 by protein kinase C enhances its diaphorase activity and binding to Rac2, p67phox, and p47phox.</title>
        <authorList>
            <person name="Raad H."/>
            <person name="Paclet M.H."/>
            <person name="Boussetta T."/>
            <person name="Kroviarski Y."/>
            <person name="Morel F."/>
            <person name="Quinn M.T."/>
            <person name="Gougerot-Pocidalo M.A."/>
            <person name="Dang P.M."/>
            <person name="El-Benna J."/>
        </authorList>
    </citation>
    <scope>SUBUNIT</scope>
    <scope>PHOSPHORYLATION</scope>
    <scope>TISSUE SPECIFICITY</scope>
</reference>
<reference key="15">
    <citation type="journal article" date="2009" name="J. Proteome Res.">
        <title>Glycoproteomics analysis of human liver tissue by combination of multiple enzyme digestion and hydrazide chemistry.</title>
        <authorList>
            <person name="Chen R."/>
            <person name="Jiang X."/>
            <person name="Sun D."/>
            <person name="Han G."/>
            <person name="Wang F."/>
            <person name="Ye M."/>
            <person name="Wang L."/>
            <person name="Zou H."/>
        </authorList>
    </citation>
    <scope>GLYCOSYLATION [LARGE SCALE ANALYSIS] AT ASN-132; ASN-149 AND ASN-240</scope>
    <source>
        <tissue>Liver</tissue>
    </source>
</reference>
<reference key="16">
    <citation type="journal article" date="2012" name="PLoS ONE">
        <title>Molecular interface of S100A8 with cytochrome b and NADPH oxidase activation.</title>
        <authorList>
            <person name="Berthier S."/>
            <person name="Nguyen M.V."/>
            <person name="Baillet A."/>
            <person name="Hograindleur M.A."/>
            <person name="Paclet M.H."/>
            <person name="Polack B."/>
            <person name="Morel F."/>
        </authorList>
    </citation>
    <scope>SUBCELLULAR LOCATION</scope>
    <scope>INTERACTION WITH CALPROTECTIN</scope>
</reference>
<reference key="17">
    <citation type="journal article" date="2014" name="J. Proteomics">
        <title>An enzyme assisted RP-RPLC approach for in-depth analysis of human liver phosphoproteome.</title>
        <authorList>
            <person name="Bian Y."/>
            <person name="Song C."/>
            <person name="Cheng K."/>
            <person name="Dong M."/>
            <person name="Wang F."/>
            <person name="Huang J."/>
            <person name="Sun D."/>
            <person name="Wang L."/>
            <person name="Ye M."/>
            <person name="Zou H."/>
        </authorList>
    </citation>
    <scope>IDENTIFICATION BY MASS SPECTROMETRY [LARGE SCALE ANALYSIS]</scope>
    <source>
        <tissue>Liver</tissue>
    </source>
</reference>
<reference key="18">
    <citation type="journal article" date="2017" name="J. Exp. Med.">
        <title>Eros is a novel transmembrane protein that controls the phagocyte respiratory burst and is essential for innate immunity.</title>
        <authorList>
            <person name="Thomas D.C."/>
            <person name="Clare S."/>
            <person name="Sowerby J.M."/>
            <person name="Pardo M."/>
            <person name="Juss J.K."/>
            <person name="Goulding D.A."/>
            <person name="van der Weyden L."/>
            <person name="Storisteanu D."/>
            <person name="Prakash A."/>
            <person name="Espeli M."/>
            <person name="Flint S."/>
            <person name="Lee J.C."/>
            <person name="Hoenderdos K."/>
            <person name="Kane L."/>
            <person name="Harcourt K."/>
            <person name="Mukhopadhyay S."/>
            <person name="Umrania Y."/>
            <person name="Antrobus R."/>
            <person name="Nathan J.A."/>
            <person name="Adams D.J."/>
            <person name="Bateman A."/>
            <person name="Choudhary J.S."/>
            <person name="Lyons P.A."/>
            <person name="Condliffe A.M."/>
            <person name="Chilvers E.R."/>
            <person name="Dougan G."/>
            <person name="Smith K.G."/>
        </authorList>
    </citation>
    <scope>INTERACTION WITH CYBC1</scope>
    <scope>SUBCELLULAR LOCATION</scope>
</reference>
<reference key="19">
    <citation type="journal article" date="1997" name="Biochem. J.">
        <title>Interaction of human neutrophil flavocytochrome b with cytosolic proteins: transferred-NOESY NMR studies of a gp91phox C-terminal peptide bound to p47phox.</title>
        <authorList>
            <person name="Adams E.R."/>
            <person name="Dratz E.A."/>
            <person name="Gizachew D."/>
            <person name="Deleo F.R."/>
            <person name="Yu L."/>
            <person name="Volpp B.D."/>
            <person name="Vlases M."/>
            <person name="Jesaitis A.J."/>
            <person name="Quinn M.T."/>
        </authorList>
    </citation>
    <scope>STRUCTURE BY NMR OF 556-570 IN COMPLEX WITH NCF1</scope>
    <scope>INTERACTION WITH NCF1</scope>
</reference>
<reference evidence="45" key="20">
    <citation type="journal article" date="2022" name="Elife">
        <title>Structure of human phagocyte NADPH oxidase in the resting state.</title>
        <authorList>
            <person name="Liu R."/>
            <person name="Song K."/>
            <person name="Wu J.X."/>
            <person name="Geng X.P."/>
            <person name="Zheng L."/>
            <person name="Gao X."/>
            <person name="Peng H."/>
            <person name="Chen L."/>
        </authorList>
    </citation>
    <scope>STRUCTURE BY ELECTRON MICROSCOPY (3.30 ANGSTROMS) OF 1-570 IN COMPLEX WITH CYBA; HEME AND FAD</scope>
    <scope>FUNCTION</scope>
    <scope>CATALYTIC ACTIVITY</scope>
    <scope>COFACTOR</scope>
    <scope>TOPOLOGY</scope>
    <scope>GLYCOSYLATION AT ASN-132 AND ASN-240</scope>
</reference>
<reference evidence="44" key="21">
    <citation type="journal article" date="2022" name="Nat. Commun.">
        <title>Structure of the core human NADPH oxidase NOX2.</title>
        <authorList>
            <person name="Noreng S."/>
            <person name="Ota N."/>
            <person name="Sun Y."/>
            <person name="Ho H."/>
            <person name="Johnson M."/>
            <person name="Arthur C.P."/>
            <person name="Schneider K."/>
            <person name="Lehoux I."/>
            <person name="Davies C.W."/>
            <person name="Mortara K."/>
            <person name="Wong K."/>
            <person name="Seshasayee D."/>
            <person name="Masureel M."/>
            <person name="Payandeh J."/>
            <person name="Yi T."/>
            <person name="Koerber J.T."/>
        </authorList>
    </citation>
    <scope>STRUCTURE BY ELECTRON MICROSCOPY (3.20 ANGSTROMS) OF 2-570 IN COMPLEX WITH CYBA</scope>
    <scope>FUNCTION</scope>
    <scope>CATALYTIC ACTIVITY</scope>
    <scope>COFACTOR</scope>
    <scope>SUBUNIT</scope>
    <scope>TOPOLOGY</scope>
</reference>
<reference evidence="46 47" key="22">
    <citation type="journal article" date="2024" name="Nature">
        <title>Structure of human phagocyte NADPH oxidase in the activated state.</title>
        <authorList>
            <person name="Liu X."/>
            <person name="Shi Y."/>
            <person name="Liu R."/>
            <person name="Song K."/>
            <person name="Chen L."/>
        </authorList>
    </citation>
    <scope>STRUCTURE BY ELECTRON MICROSCOPY (2.79 ANGSTROMS) OF 2-570 IN COMPLEX WITH CYBA; NFC1; NFC2; RAC1; FAD; HEME AND NADPH</scope>
    <scope>SUBUNIT</scope>
    <scope>FUNCTION</scope>
    <scope>CATALYTIC ACTIVITY</scope>
    <scope>BIOPHYSICOCHEMICAL PROPERTIES</scope>
    <scope>IDENTIFICATION OF THE NADPH OXIDASE COMPLEX</scope>
    <scope>INTERACTION WITH RAC1</scope>
    <scope>GLYCOSYLATION AT ASN-132 AND ASN-240</scope>
    <scope>MUTAGENESIS OF PHE-570</scope>
</reference>
<reference key="23">
    <citation type="journal article" date="1989" name="J. Clin. Invest.">
        <title>A missense mutation in the neutrophil cytochrome b heavy chain in cytochrome-positive X-linked chronic granulomatous disease.</title>
        <authorList>
            <person name="Dinauer M.C."/>
            <person name="Curnutte J.T."/>
            <person name="Rosen H.R."/>
            <person name="Orkin S.H."/>
        </authorList>
    </citation>
    <scope>INVOLVEMENT IN CGDX</scope>
    <scope>VARIANT CGDX HIS-415</scope>
</reference>
<reference key="24">
    <citation type="journal article" date="1991" name="Blood">
        <title>Point mutations in the beta-subunit of cytochrome b558 leading to X-linked chronic granulomatous disease.</title>
        <authorList>
            <person name="Bolscher B.G.J.M."/>
            <person name="de Boer M."/>
            <person name="de Klein A."/>
            <person name="Weening R.S."/>
            <person name="Roos D."/>
        </authorList>
    </citation>
    <scope>VARIANTS CGDX ARG-101; THR-156; TYR-209; SER-244 AND ALA-389</scope>
</reference>
<reference key="25">
    <citation type="journal article" date="1993" name="Eur. J. Pediatr.">
        <title>A newly recognized point mutation in the cytochrome b558 heavy chain gene replacing alanine57 by glutamic acid, in a patient with cytochrome b positive X-linked chronic granulomatous disease.</title>
        <authorList>
            <person name="Ariga T."/>
            <person name="Sakiyama Y."/>
            <person name="Tomizawa K."/>
            <person name="Imajoh-Ohmi S."/>
            <person name="Kanegasaki S."/>
            <person name="Matsumoto S."/>
        </authorList>
    </citation>
    <scope>VARIANT CGDX GLU-57</scope>
</reference>
<reference key="26">
    <citation type="journal article" date="1994" name="Hum. Genet.">
        <title>Two novel point mutations in the cytochrome b 558 heavy chain gene, detected in two Japanese patients with X-linked chronic granulomatous disease.</title>
        <authorList>
            <person name="Ariga T."/>
            <person name="Sakiyama Y."/>
            <person name="Matsumoto S."/>
        </authorList>
    </citation>
    <scope>VARIANT CGDX HIS-339</scope>
</reference>
<reference key="27">
    <citation type="journal article" date="1994" name="J. Clin. Invest.">
        <title>A point mutation in gp91-phox of cytochrome b558 of the human NADPH oxidase leading to defective translocation of the cytosolic proteins p47-phox and p67-phox.</title>
        <authorList>
            <person name="Leusen J.H.W."/>
            <person name="de Boer M."/>
            <person name="Bolscher B.G.J.M."/>
            <person name="Hilarius P.M."/>
            <person name="Weening R.S."/>
            <person name="Ochs H.D."/>
            <person name="Roos D."/>
            <person name="Verhoeven A.J."/>
        </authorList>
    </citation>
    <scope>VARIANT CGDX GLY-500</scope>
</reference>
<reference key="28">
    <citation type="journal article" date="1996" name="Blood">
        <title>Identification of mutations in seven Chinese patients with X-linked chronic granulomatous disease.</title>
        <authorList>
            <person name="Hui Y.F."/>
            <person name="Chan S.Y."/>
            <person name="Lau Y.L."/>
        </authorList>
    </citation>
    <scope>VARIANTS CGDX ILE-205; PHE-215 DEL AND GLN-342</scope>
</reference>
<reference key="29">
    <citation type="journal article" date="1996" name="Blood">
        <authorList>
            <person name="Hui Y.F."/>
            <person name="Chan S.Y."/>
            <person name="Lau Y.L."/>
        </authorList>
    </citation>
    <scope>ERRATUM OF PUBMED:8916969</scope>
</reference>
<reference key="30">
    <citation type="journal article" date="1997" name="Eur. J. Haematol.">
        <title>An in-frame triplet deletion within the gp91-phox gene in an adult X-linked chronic granulomatous disease patient with residual NADPH-oxidase activity.</title>
        <authorList>
            <person name="Jendrossek V."/>
            <person name="Ritzel A."/>
            <person name="Neubauer B."/>
            <person name="Heyden S."/>
            <person name="Gahr M."/>
        </authorList>
    </citation>
    <scope>VARIANT CGDX PHE-215 DEL</scope>
</reference>
<reference key="31">
    <citation type="journal article" date="1998" name="Am. J. Hum. Genet.">
        <title>X-linked chronic granulomatous disease: mutations in the CYBB gene encoding the gp91-phox component of respiratory-burst oxidase.</title>
        <authorList>
            <person name="Rae J."/>
            <person name="Newburger P.E."/>
            <person name="Dinauer M.C."/>
            <person name="Noack D."/>
            <person name="Hopkins P.J."/>
            <person name="Kuruto R."/>
            <person name="Curnutte J.T."/>
        </authorList>
    </citation>
    <scope>VARIANTS CGDX ARG-20; SER-54; ARG-59; ARG-119; THR-156; GLN-209; ASN-222; ARG-222; TYR-222; LEU-223; ARG-244; LYS-309; LYS-315 DEL; GLU-322; PHE-325; PRO-333; HIS-339; PRO-356; ARG-405; GLU-408; ARG-408; HIS-415; LEU-415; PRO-422; ARG-453; CYS-516; ASP-534 AND ARG-537</scope>
</reference>
<reference key="32">
    <citation type="journal article" date="1998" name="Hum. Genet.">
        <title>A novel mutation at a probable heme-binding ligand in neutrophil cytochrome b558 in atypical X-linked chronic granulomatous disease.</title>
        <authorList>
            <person name="Tsuda M."/>
            <person name="Kaneda M."/>
            <person name="Sakiyama T."/>
            <person name="Inana I."/>
            <person name="Owada M."/>
            <person name="Kiryu C."/>
            <person name="Shiraishi T."/>
            <person name="Kakinuma K."/>
        </authorList>
    </citation>
    <scope>VARIANT CGDX TYR-101</scope>
</reference>
<reference key="33">
    <citation type="journal article" date="1998" name="J. Immunol.">
        <title>Nicotinamide-adenine dinucleotide phosphate oxidase assembly and activation in EBV-transformed B lymphoblastoid cell lines of normal and chronic granulomatous disease patients.</title>
        <authorList>
            <person name="Dusi S."/>
            <person name="Nadalini K.A."/>
            <person name="Donini M."/>
            <person name="Zentilin L."/>
            <person name="Wientjes F.B."/>
            <person name="Roos D."/>
            <person name="Giacca M."/>
            <person name="Rossi F."/>
        </authorList>
    </citation>
    <scope>VARIANTS CGDX ARG-179 AND 298-THR--THR-302 DEL</scope>
</reference>
<reference key="34">
    <citation type="journal article" date="1998" name="Pediatr. Res.">
        <title>Genetic analysis of 13 families with X-linked chronic granulomatous disease reveals a low proportion of sporadic patients and a high proportion of sporadic carriers.</title>
        <authorList>
            <person name="Ariga T."/>
            <person name="Furuta H."/>
            <person name="Cho K."/>
            <person name="Sakiyama Y."/>
        </authorList>
    </citation>
    <scope>VARIANTS CGDX MET-54; ASP-55; GLU-57; HIS-339 AND PHE-344</scope>
</reference>
<reference key="35">
    <citation type="journal article" date="1999" name="Exp. Hematol.">
        <title>Uncommon missense and splice mutations and resulting biochemical phenotypes in German patients with X-linked chronic granulomatous disease.</title>
        <authorList>
            <person name="Roesler J."/>
            <person name="Heyden S."/>
            <person name="Burdelski M."/>
            <person name="Schaefer H."/>
            <person name="Kreth H.-W."/>
            <person name="Lehmann R."/>
            <person name="Paul D."/>
            <person name="Marzahn J."/>
            <person name="Gahr M."/>
            <person name="Roesen-Wolff A."/>
        </authorList>
    </citation>
    <scope>VARIANTS CGDX PHE-193; ARG-222; TYR-338; HIS-339 AND PRO-546</scope>
    <scope>VARIANT ARG-364</scope>
</reference>
<reference key="36">
    <citation type="journal article" date="1999" name="Hum. Mutat.">
        <title>Molecular analysis of chronic granulomatous disease caused by defects in gp91-phox.</title>
        <authorList>
            <person name="Patino P.J."/>
            <person name="Perez J.E."/>
            <person name="Lopez J.A."/>
            <person name="Condino-Neto A."/>
            <person name="Grumach A.S."/>
            <person name="Botero J.H."/>
            <person name="Curnutte J.T."/>
            <person name="Garcia de Olarte D."/>
        </authorList>
    </citation>
    <scope>VARIANTS CGDX VAL-225 AND TYR-244</scope>
</reference>
<reference key="37">
    <citation type="journal article" date="2000" name="Hum. Genet.">
        <title>Statistical and mutational analysis of chronic granulomatous disease in Japan with special reference to gp91-phox and p22-phox deficiency.</title>
        <authorList>
            <person name="Ishibashi F."/>
            <person name="Nunoi H."/>
            <person name="Endo F."/>
            <person name="Matsuda I."/>
            <person name="Kanegasaki S."/>
        </authorList>
    </citation>
    <scope>VARIANTS CGDX MET-54; ASP-55; GLU-57; TYR-101; ARG-209; GLY-224; LYS-309; TYR-338; HIS-339; PHE-344; GLU-389; PRO-420 AND ARG-516</scope>
</reference>
<reference key="38">
    <citation type="journal article" date="2001" name="Blood Cells Mol. Dis.">
        <title>Hematologically important mutations: X-linked chronic granulomatous disease (second update).</title>
        <authorList>
            <person name="Heyworth P.G."/>
            <person name="Curnutte J.T."/>
            <person name="Rae J."/>
            <person name="Noack D."/>
            <person name="Roos D."/>
            <person name="van Koppen E."/>
            <person name="Cross A.R."/>
        </authorList>
    </citation>
    <scope>VARIANT CGDX CYS-18</scope>
</reference>
<reference key="39">
    <citation type="journal article" date="2001" name="Hum. Mutat.">
        <title>Characterization of 11 novel mutations in the X-linked chronic granulomatous disease (CYBB gene).</title>
        <authorList>
            <person name="Gerard B."/>
            <person name="El Benna J."/>
            <person name="Alcain F."/>
            <person name="Gougerot-Pocidalo M.-A."/>
            <person name="Grandchamp B."/>
            <person name="Chollet-Martin S."/>
        </authorList>
    </citation>
    <scope>VARIANTS CGDX 54-ARG-ALA-55 DEL; TRP-59; PRO-307 AND ARG-505</scope>
</reference>
<reference key="40">
    <citation type="journal article" date="2002" name="Biochim. Biophys. Acta">
        <title>Molecular and functional characterization of a new X-linked chronic granulomatous disease variant (X91+) case with a double missense mutation in the cytosolic gp91phox C-terminal tail.</title>
        <authorList>
            <person name="Stasia M.J."/>
            <person name="Lardy B."/>
            <person name="Maturana A."/>
            <person name="Rousseau P."/>
            <person name="Martel C."/>
            <person name="Bordigoni P."/>
            <person name="Demaurex N."/>
            <person name="Morel F."/>
        </authorList>
    </citation>
    <scope>VARIANTS CGDX ASN-303 AND ARG-304</scope>
</reference>
<reference key="41">
    <citation type="journal article" date="2004" name="Hum. Genet.">
        <title>Functional analysis of two-amino acid substitutions in gp91 phox in a patient with X-linked flavocytochrome b558-positive chronic granulomatous disease by means of transgenic PLB-985 cells.</title>
        <authorList>
            <person name="Bionda C."/>
            <person name="Li X.J."/>
            <person name="van Bruggen R."/>
            <person name="Eppink M."/>
            <person name="Roos D."/>
            <person name="Morel F."/>
            <person name="Stasia M.-J."/>
        </authorList>
    </citation>
    <scope>CHARACTERIZATION OF VARIANTS CGDX ASN-303 AND ARG-304</scope>
    <scope>FUNCTION</scope>
    <scope>CATALYTIC ACTIVITY</scope>
    <scope>SUBUNIT</scope>
    <scope>SUBCELLULAR LOCATION</scope>
</reference>
<reference key="42">
    <citation type="journal article" date="2009" name="J. Clin. Immunol.">
        <title>First report of clinical, functional, and molecular investigation of chronic granulomatous disease in nine Jordanian families.</title>
        <authorList>
            <person name="Bakri F.G."/>
            <person name="Martel C."/>
            <person name="Khuri-Bulos N."/>
            <person name="Mahafzah A."/>
            <person name="El-Khateeb M.S."/>
            <person name="Al-Wahadneh A.M."/>
            <person name="Hayajneh W.A."/>
            <person name="Hamamy H.A."/>
            <person name="Maquet E."/>
            <person name="Molin M."/>
            <person name="Stasia M.J."/>
        </authorList>
    </citation>
    <scope>VARIANT CGDX ARG-408</scope>
</reference>
<reference key="43">
    <citation type="journal article" date="2011" name="Nat. Immunol.">
        <title>Germline CYBB mutations that selectively affect macrophages in kindreds with X-linked predisposition to tuberculous mycobacterial disease.</title>
        <authorList>
            <person name="Bustamante J."/>
            <person name="Arias A.A."/>
            <person name="Vogt G."/>
            <person name="Picard C."/>
            <person name="Galicia L.B."/>
            <person name="Prando C."/>
            <person name="Grant A.V."/>
            <person name="Marchal C.C."/>
            <person name="Hubeau M."/>
            <person name="Chapgier A."/>
            <person name="de Beaucoudrey L."/>
            <person name="Puel A."/>
            <person name="Feinberg J."/>
            <person name="Valinetz E."/>
            <person name="Janniere L."/>
            <person name="Besse C."/>
            <person name="Boland A."/>
            <person name="Brisseau J.M."/>
            <person name="Blanche S."/>
            <person name="Lortholary O."/>
            <person name="Fieschi C."/>
            <person name="Emile J.F."/>
            <person name="Boisson-Dupuis S."/>
            <person name="Al-Muhsen S."/>
            <person name="Woda B."/>
            <person name="Newburger P.E."/>
            <person name="Condino-Neto A."/>
            <person name="Dinauer M.C."/>
            <person name="Abel L."/>
            <person name="Casanova J.L."/>
        </authorList>
    </citation>
    <scope>VARIANTS IMD34 PRO-178 AND PRO-231</scope>
</reference>
<reference key="44">
    <citation type="journal article" date="2012" name="Hum. Mutat.">
        <title>Identification and functional characterization of two novel mutations in the alpha-helical loop (residues 484-503) of CYBB/gp91(phox) resulting in the rare X91(+) variant of chronic granulomatous disease.</title>
        <authorList>
            <person name="Boog B."/>
            <person name="Quach A."/>
            <person name="Costabile M."/>
            <person name="Smart J."/>
            <person name="Quinn P."/>
            <person name="Singh H."/>
            <person name="Gold M."/>
            <person name="Booker G."/>
            <person name="Choo S."/>
            <person name="Hii C.S."/>
            <person name="Ferrante A."/>
        </authorList>
    </citation>
    <scope>VARIANTS CGDX ASP-488 AND GLU-500</scope>
</reference>
<reference key="45">
    <citation type="journal article" date="2013" name="J. Allergy Clin. Immunol.">
        <title>Clinical, functional, and genetic characterization of chronic granulomatous disease in 89 Turkish patients.</title>
        <authorList>
            <person name="Koker M.Y."/>
            <person name="Camcioglu Y."/>
            <person name="van Leeuwen K."/>
            <person name="Kilic S.S."/>
            <person name="Barlan I."/>
            <person name="Yilmaz M."/>
            <person name="Metin A."/>
            <person name="de Boer M."/>
            <person name="Avcilar H."/>
            <person name="Patiroglu T."/>
            <person name="Yildiran A."/>
            <person name="Yegin O."/>
            <person name="Tezcan I."/>
            <person name="Sanal O."/>
            <person name="Roos D."/>
        </authorList>
    </citation>
    <scope>VARIANTS CGDX ASN-299; ASP-338; HIS-339; PHE-344 AND GLU-412</scope>
</reference>
<reference key="46">
    <citation type="journal article" date="2016" name="Microb. Pathog.">
        <title>A novel missense mutation in the NADPH binding domain of CYBB abolishes the NADPH oxidase activity in a male patient with increased susceptibility to infections.</title>
        <authorList>
            <person name="Khan T.A."/>
            <person name="Kalsoom K."/>
            <person name="Iqbal A."/>
            <person name="Asif H."/>
            <person name="Rahman H."/>
            <person name="Farooq S.O."/>
            <person name="Naveed H."/>
            <person name="Nasir U."/>
            <person name="Amin M.U."/>
            <person name="Hussain M."/>
            <person name="Tipu H.N."/>
            <person name="Florea A."/>
        </authorList>
    </citation>
    <scope>VARIANT CGDX GLY-409</scope>
</reference>
<sequence length="570" mass="65336">MGNWAVNEGLSIFVILVWLGLNVFLFVWYYRVYDIPPKFFYTRKLLGSALALARAPAACLNFNCMLILLPVCRNLLSFLRGSSACCSTRVRRQLDRNLTFHKMVAWMIALHSAIHTIAHLFNVEWCVNARVNNSDPYSVALSELGDRQNESYLNFARKRIKNPEGGLYLAVTLLAGITGVVITLCLILIITSSTKTIRRSYFEVFWYTHHLFVIFFIGLAIHGAERIVRGQTAESLAVHNITVCEQKISEWGKIKECPIPQFAGNPPMTWKWIVGPMFLYLCERLVRFWRSQQKVVITKVVTHPFKTIELQMKKKGFKMEVGQYIFVKCPKVSKLEWHPFTLTSAPEEDFFSIHIRIVGDWTEGLFNACGCDKQEFQDAWKLPKIAVDGPFGTASEDVFSYEVVMLVGAGIGVTPFASILKSVWYKYCNNATNLKLKKIYFYWLCRDTHAFEWFADLLQLLESQMQERNNAGFLSYNIYLTGWDESQANHFAVHHDEEKDVITGLKQKTLYGRPNWDNEFKTIASQHPNTRIGVFLCGPEALAETLSKQSISNSESGPRGVHFIFNKENF</sequence>
<evidence type="ECO:0000250" key="1">
    <source>
        <dbReference type="UniProtKB" id="P13498"/>
    </source>
</evidence>
<evidence type="ECO:0000250" key="2">
    <source>
        <dbReference type="UniProtKB" id="Q61093"/>
    </source>
</evidence>
<evidence type="ECO:0000255" key="3">
    <source>
        <dbReference type="PROSITE-ProRule" id="PRU00716"/>
    </source>
</evidence>
<evidence type="ECO:0000269" key="4">
    <source>
    </source>
</evidence>
<evidence type="ECO:0000269" key="5">
    <source>
    </source>
</evidence>
<evidence type="ECO:0000269" key="6">
    <source>
    </source>
</evidence>
<evidence type="ECO:0000269" key="7">
    <source>
    </source>
</evidence>
<evidence type="ECO:0000269" key="8">
    <source>
    </source>
</evidence>
<evidence type="ECO:0000269" key="9">
    <source>
    </source>
</evidence>
<evidence type="ECO:0000269" key="10">
    <source>
    </source>
</evidence>
<evidence type="ECO:0000269" key="11">
    <source>
    </source>
</evidence>
<evidence type="ECO:0000269" key="12">
    <source>
    </source>
</evidence>
<evidence type="ECO:0000269" key="13">
    <source>
    </source>
</evidence>
<evidence type="ECO:0000269" key="14">
    <source>
    </source>
</evidence>
<evidence type="ECO:0000269" key="15">
    <source>
    </source>
</evidence>
<evidence type="ECO:0000269" key="16">
    <source>
    </source>
</evidence>
<evidence type="ECO:0000269" key="17">
    <source>
    </source>
</evidence>
<evidence type="ECO:0000269" key="18">
    <source>
    </source>
</evidence>
<evidence type="ECO:0000269" key="19">
    <source>
    </source>
</evidence>
<evidence type="ECO:0000269" key="20">
    <source>
    </source>
</evidence>
<evidence type="ECO:0000269" key="21">
    <source>
    </source>
</evidence>
<evidence type="ECO:0000269" key="22">
    <source>
    </source>
</evidence>
<evidence type="ECO:0000269" key="23">
    <source>
    </source>
</evidence>
<evidence type="ECO:0000269" key="24">
    <source>
    </source>
</evidence>
<evidence type="ECO:0000269" key="25">
    <source>
    </source>
</evidence>
<evidence type="ECO:0000269" key="26">
    <source>
    </source>
</evidence>
<evidence type="ECO:0000269" key="27">
    <source>
    </source>
</evidence>
<evidence type="ECO:0000269" key="28">
    <source>
    </source>
</evidence>
<evidence type="ECO:0000269" key="29">
    <source>
    </source>
</evidence>
<evidence type="ECO:0000269" key="30">
    <source>
    </source>
</evidence>
<evidence type="ECO:0000269" key="31">
    <source>
    </source>
</evidence>
<evidence type="ECO:0000269" key="32">
    <source>
    </source>
</evidence>
<evidence type="ECO:0000269" key="33">
    <source>
    </source>
</evidence>
<evidence type="ECO:0000269" key="34">
    <source>
    </source>
</evidence>
<evidence type="ECO:0000269" key="35">
    <source>
    </source>
</evidence>
<evidence type="ECO:0000269" key="36">
    <source>
    </source>
</evidence>
<evidence type="ECO:0000269" key="37">
    <source>
    </source>
</evidence>
<evidence type="ECO:0000269" key="38">
    <source>
    </source>
</evidence>
<evidence type="ECO:0000269" key="39">
    <source>
    </source>
</evidence>
<evidence type="ECO:0000305" key="40"/>
<evidence type="ECO:0000305" key="41">
    <source>
    </source>
</evidence>
<evidence type="ECO:0000305" key="42">
    <source>
    </source>
</evidence>
<evidence type="ECO:0000312" key="43">
    <source>
        <dbReference type="HGNC" id="HGNC:2578"/>
    </source>
</evidence>
<evidence type="ECO:0007744" key="44">
    <source>
        <dbReference type="PDB" id="7U8G"/>
    </source>
</evidence>
<evidence type="ECO:0007744" key="45">
    <source>
        <dbReference type="PDB" id="8GZ3"/>
    </source>
</evidence>
<evidence type="ECO:0007744" key="46">
    <source>
        <dbReference type="PDB" id="8WEJ"/>
    </source>
</evidence>
<evidence type="ECO:0007744" key="47">
    <source>
        <dbReference type="PDB" id="8X2L"/>
    </source>
</evidence>
<evidence type="ECO:0007829" key="48">
    <source>
        <dbReference type="PDB" id="3A1F"/>
    </source>
</evidence>
<evidence type="ECO:0007829" key="49">
    <source>
        <dbReference type="PDB" id="8WEJ"/>
    </source>
</evidence>
<evidence type="ECO:0007829" key="50">
    <source>
        <dbReference type="PDB" id="8X2L"/>
    </source>
</evidence>
<comment type="function">
    <text evidence="1 2 13 16 26 27 28 42">Catalytic subunit of the phagocyte NADPH oxidase complex that mediates the transfer of electrons from cytosolic NADPH to O2 to produce the superoxide anion (O2(-)) (PubMed:15338276, PubMed:36241643, PubMed:36413210, PubMed:38355798). In the activated complex, electrons are first transferred from NADPH to flavin adenine dinucleotide (FAD) and subsequently transferred via two heme molecules to molecular oxygen, producing superoxide through an outer-sphere reaction (Probable) (PubMed:38355798). Activation of the NADPH oxidase complex is initiated by the assembly of cytosolic subunits of the NADPH oxidase complex with the core NADPH oxidase complex to form a complex at the plasma membrane or phagosomal membrane (PubMed:19028840, PubMed:38355798). This activation process is initiated by phosphorylation dependent binding of the cytosolic NCF1/p47-phox subunit to the C-terminus of CYBA/p22-phox (By similarity). NADPH oxidase complex assembly is impaired through interaction with NRROS (By similarity).</text>
</comment>
<comment type="catalytic activity">
    <reaction evidence="13 26 27 28">
        <text>NADPH + 2 O2 = 2 superoxide + NADP(+) + H(+)</text>
        <dbReference type="Rhea" id="RHEA:63180"/>
        <dbReference type="ChEBI" id="CHEBI:15378"/>
        <dbReference type="ChEBI" id="CHEBI:15379"/>
        <dbReference type="ChEBI" id="CHEBI:18421"/>
        <dbReference type="ChEBI" id="CHEBI:57783"/>
        <dbReference type="ChEBI" id="CHEBI:58349"/>
    </reaction>
</comment>
<comment type="cofactor">
    <cofactor evidence="27 28">
        <name>FAD</name>
        <dbReference type="ChEBI" id="CHEBI:57692"/>
    </cofactor>
</comment>
<comment type="biophysicochemical properties">
    <kinetics>
        <KM evidence="28">82.12 uM for NADPH</KM>
    </kinetics>
</comment>
<comment type="subunit">
    <text evidence="2 13 16 20 24 25 26 27 28 34">Component of the phagocyte NADPH oxidase core complex/cytochrome b558 complex, composed of CYBB (heavy chain (beta)) and CYBA (light chain (alpha)) (PubMed:3600769, PubMed:36241643, PubMed:36413210). Component of the phagocyte NADPH oxidase complex composed of an obligatory core heterodimer formed by the membrane proteins CYBA and CYBB and the cytosolic regulatory subunits NCF1/p47-phox, NCF2/p67-phox, NCF4/p40-phox and the small GTPase RAC1 or RAC2 (PubMed:15338276, PubMed:19028840, PubMed:38355798). Interacts with NCF1 (phosphorylated form) (PubMed:19028840, PubMed:9224653). Interacts with NCF2; the interaction is enhanced in the presence of GBP7 (PubMed:19028840, PubMed:38355798). Interacts with RAC2 (PubMed:19028840). Interacts with RAC1 (PubMed:38355798). Interacts with calprotectin (S100A8/9) (PubMed:22808130). Interacts with NRROS; the interaction is direct and impairs formation of a stable NADPH oxidase complex (By similarity). Interacts with CYBC1; CYBC1 may act as a chaperone stabilizing Cytochrome b-245 heterodimer (PubMed:28351984). The CYBA-CYBB complex interacts with GBP7 (By similarity).</text>
</comment>
<comment type="interaction">
    <interactant intactId="EBI-6253630">
        <id>P04839</id>
    </interactant>
    <interactant intactId="EBI-2680384">
        <id>Q9BQA9</id>
        <label>CYBC1</label>
    </interactant>
    <organismsDiffer>false</organismsDiffer>
    <experiments>3</experiments>
</comment>
<comment type="subcellular location">
    <subcellularLocation>
        <location evidence="13 20">Cell membrane</location>
        <topology>Multi-pass membrane protein</topology>
    </subcellularLocation>
    <text evidence="41">As unassembled monomer may localize to the endoplasmic reticulum.</text>
</comment>
<comment type="tissue specificity">
    <text evidence="16">Detected in neutrophils (at protein level).</text>
</comment>
<comment type="PTM">
    <text evidence="17">Glycosylated.</text>
</comment>
<comment type="PTM">
    <text evidence="16">Phosphorylated on Ser and Thr residues by PKC during neutrophils activation (PubMed:19028840). Phosphorylation enhances the NADPH oxidase activity and stimulates its interaction with RAC2, NCF2/p67-phox, and NCF1/p47-phox (PubMed:19028840).</text>
</comment>
<comment type="PTM">
    <text evidence="2">Undergoes 'Lys-48'-linked polyubiquitination, likely by RNF145, triggering endoplasmic reticulum-associated degradation.</text>
</comment>
<comment type="disease" evidence="4 6 7 8 10 12 13 14 15 19 21 22 23 29 30 31 32 33 35 36 37 38 39">
    <disease id="DI-00307">
        <name>Granulomatous disease, chronic, X-linked</name>
        <acronym>CGDX</acronym>
        <description>A form of chronic granulomatous disease, a primary immunodeficiency characterized by severe recurrent bacterial and fungal infections, along with manifestations of chronic granulomatous inflammation. It results from an impaired ability of phagocytes to mount a burst of reactive oxygen species in response to pathogens.</description>
        <dbReference type="MIM" id="306400"/>
    </disease>
    <text>The disease is caused by variants affecting the gene represented in this entry.</text>
</comment>
<comment type="disease" evidence="18">
    <disease id="DI-03091">
        <name>Immunodeficiency 34</name>
        <acronym>IMD34</acronym>
        <description>A form of Mendelian susceptibility to mycobacterial disease, a rare condition characterized by predisposition to illness caused by moderately virulent mycobacterial species, such as Bacillus Calmette-Guerin (BCG) vaccine, environmental non-tuberculous mycobacteria, and by the more virulent Mycobacterium tuberculosis. Other microorganisms rarely cause severe clinical disease in individuals with susceptibility to mycobacterial infections, with the exception of Salmonella which infects less than 50% of these individuals.</description>
        <dbReference type="MIM" id="300645"/>
    </disease>
    <text>Disease susceptibility is associated with variants affecting the gene represented in this entry.</text>
</comment>
<comment type="caution">
    <text evidence="5 9 11">Originally thought to be the voltage-gated proton channel responsible for the proton efflux that compensates for the charge movement across the cell membrane (PubMed:10578014). But recent data do not support this idea (PubMed:11477065, PubMed:12034764). DeCoursey et al, show that the selectivity and gating kinetics of voltage-gated proton channels are identical regardless of whether CYBB is present in human myeloid leukemia cells line lacking or expressing CYBB (PubMed:11477065). In addition, no proton currents is detected in COS-7 cells transfected with CYBB (PubMed:12034764).</text>
</comment>
<comment type="sequence caution" evidence="40">
    <conflict type="erroneous initiation">
        <sequence resource="EMBL-CDS" id="CAA27635"/>
    </conflict>
    <text>Truncated N-terminus.</text>
</comment>
<comment type="sequence caution" evidence="40">
    <conflict type="erroneous gene model prediction">
        <sequence resource="EMBL-CDS" id="CAA29327"/>
    </conflict>
</comment>
<comment type="online information" name="CYBBbase">
    <link uri="http://structure.bmc.lu.se/idbase/CYBBbase/"/>
    <text>CYBB deficiency database</text>
</comment>
<comment type="online information" name="Mendelian genes cytochrome b-245, beta polypeptide (CYBB)">
    <link uri="https://databases.lovd.nl/shared/genes/CYBB"/>
    <text>Leiden Open Variation Database (LOVD)</text>
</comment>